<gene>
    <name type="primary">EIF4A3</name>
    <name type="synonym">DDX48</name>
    <name type="synonym">KIAA0111</name>
</gene>
<organism>
    <name type="scientific">Homo sapiens</name>
    <name type="common">Human</name>
    <dbReference type="NCBI Taxonomy" id="9606"/>
    <lineage>
        <taxon>Eukaryota</taxon>
        <taxon>Metazoa</taxon>
        <taxon>Chordata</taxon>
        <taxon>Craniata</taxon>
        <taxon>Vertebrata</taxon>
        <taxon>Euteleostomi</taxon>
        <taxon>Mammalia</taxon>
        <taxon>Eutheria</taxon>
        <taxon>Euarchontoglires</taxon>
        <taxon>Primates</taxon>
        <taxon>Haplorrhini</taxon>
        <taxon>Catarrhini</taxon>
        <taxon>Hominidae</taxon>
        <taxon>Homo</taxon>
    </lineage>
</organism>
<reference key="1">
    <citation type="submission" date="1994-06" db="EMBL/GenBank/DDBJ databases">
        <title>Cloning and sequencing of a putative human translation initiation factor with similarity to initiation factor 4AII.</title>
        <authorList>
            <person name="Leffers H."/>
            <person name="Wiemann S."/>
            <person name="Ansorge W."/>
        </authorList>
    </citation>
    <scope>NUCLEOTIDE SEQUENCE [MRNA]</scope>
    <source>
        <tissue>Skin</tissue>
    </source>
</reference>
<reference key="2">
    <citation type="journal article" date="1995" name="DNA Res.">
        <title>Prediction of the coding sequences of unidentified human genes. III. The coding sequences of 40 new genes (KIAA0081-KIAA0120) deduced by analysis of cDNA clones from human cell line KG-1.</title>
        <authorList>
            <person name="Nagase T."/>
            <person name="Miyajima N."/>
            <person name="Tanaka A."/>
            <person name="Sazuka T."/>
            <person name="Seki N."/>
            <person name="Sato S."/>
            <person name="Tabata S."/>
            <person name="Ishikawa K."/>
            <person name="Kawarabayasi Y."/>
            <person name="Kotani H."/>
            <person name="Nomura N."/>
        </authorList>
    </citation>
    <scope>NUCLEOTIDE SEQUENCE [LARGE SCALE MRNA]</scope>
    <source>
        <tissue>Bone marrow</tissue>
    </source>
</reference>
<reference key="3">
    <citation type="journal article" date="2004" name="Nat. Genet.">
        <title>Complete sequencing and characterization of 21,243 full-length human cDNAs.</title>
        <authorList>
            <person name="Ota T."/>
            <person name="Suzuki Y."/>
            <person name="Nishikawa T."/>
            <person name="Otsuki T."/>
            <person name="Sugiyama T."/>
            <person name="Irie R."/>
            <person name="Wakamatsu A."/>
            <person name="Hayashi K."/>
            <person name="Sato H."/>
            <person name="Nagai K."/>
            <person name="Kimura K."/>
            <person name="Makita H."/>
            <person name="Sekine M."/>
            <person name="Obayashi M."/>
            <person name="Nishi T."/>
            <person name="Shibahara T."/>
            <person name="Tanaka T."/>
            <person name="Ishii S."/>
            <person name="Yamamoto J."/>
            <person name="Saito K."/>
            <person name="Kawai Y."/>
            <person name="Isono Y."/>
            <person name="Nakamura Y."/>
            <person name="Nagahari K."/>
            <person name="Murakami K."/>
            <person name="Yasuda T."/>
            <person name="Iwayanagi T."/>
            <person name="Wagatsuma M."/>
            <person name="Shiratori A."/>
            <person name="Sudo H."/>
            <person name="Hosoiri T."/>
            <person name="Kaku Y."/>
            <person name="Kodaira H."/>
            <person name="Kondo H."/>
            <person name="Sugawara M."/>
            <person name="Takahashi M."/>
            <person name="Kanda K."/>
            <person name="Yokoi T."/>
            <person name="Furuya T."/>
            <person name="Kikkawa E."/>
            <person name="Omura Y."/>
            <person name="Abe K."/>
            <person name="Kamihara K."/>
            <person name="Katsuta N."/>
            <person name="Sato K."/>
            <person name="Tanikawa M."/>
            <person name="Yamazaki M."/>
            <person name="Ninomiya K."/>
            <person name="Ishibashi T."/>
            <person name="Yamashita H."/>
            <person name="Murakawa K."/>
            <person name="Fujimori K."/>
            <person name="Tanai H."/>
            <person name="Kimata M."/>
            <person name="Watanabe M."/>
            <person name="Hiraoka S."/>
            <person name="Chiba Y."/>
            <person name="Ishida S."/>
            <person name="Ono Y."/>
            <person name="Takiguchi S."/>
            <person name="Watanabe S."/>
            <person name="Yosida M."/>
            <person name="Hotuta T."/>
            <person name="Kusano J."/>
            <person name="Kanehori K."/>
            <person name="Takahashi-Fujii A."/>
            <person name="Hara H."/>
            <person name="Tanase T.-O."/>
            <person name="Nomura Y."/>
            <person name="Togiya S."/>
            <person name="Komai F."/>
            <person name="Hara R."/>
            <person name="Takeuchi K."/>
            <person name="Arita M."/>
            <person name="Imose N."/>
            <person name="Musashino K."/>
            <person name="Yuuki H."/>
            <person name="Oshima A."/>
            <person name="Sasaki N."/>
            <person name="Aotsuka S."/>
            <person name="Yoshikawa Y."/>
            <person name="Matsunawa H."/>
            <person name="Ichihara T."/>
            <person name="Shiohata N."/>
            <person name="Sano S."/>
            <person name="Moriya S."/>
            <person name="Momiyama H."/>
            <person name="Satoh N."/>
            <person name="Takami S."/>
            <person name="Terashima Y."/>
            <person name="Suzuki O."/>
            <person name="Nakagawa S."/>
            <person name="Senoh A."/>
            <person name="Mizoguchi H."/>
            <person name="Goto Y."/>
            <person name="Shimizu F."/>
            <person name="Wakebe H."/>
            <person name="Hishigaki H."/>
            <person name="Watanabe T."/>
            <person name="Sugiyama A."/>
            <person name="Takemoto M."/>
            <person name="Kawakami B."/>
            <person name="Yamazaki M."/>
            <person name="Watanabe K."/>
            <person name="Kumagai A."/>
            <person name="Itakura S."/>
            <person name="Fukuzumi Y."/>
            <person name="Fujimori Y."/>
            <person name="Komiyama M."/>
            <person name="Tashiro H."/>
            <person name="Tanigami A."/>
            <person name="Fujiwara T."/>
            <person name="Ono T."/>
            <person name="Yamada K."/>
            <person name="Fujii Y."/>
            <person name="Ozaki K."/>
            <person name="Hirao M."/>
            <person name="Ohmori Y."/>
            <person name="Kawabata A."/>
            <person name="Hikiji T."/>
            <person name="Kobatake N."/>
            <person name="Inagaki H."/>
            <person name="Ikema Y."/>
            <person name="Okamoto S."/>
            <person name="Okitani R."/>
            <person name="Kawakami T."/>
            <person name="Noguchi S."/>
            <person name="Itoh T."/>
            <person name="Shigeta K."/>
            <person name="Senba T."/>
            <person name="Matsumura K."/>
            <person name="Nakajima Y."/>
            <person name="Mizuno T."/>
            <person name="Morinaga M."/>
            <person name="Sasaki M."/>
            <person name="Togashi T."/>
            <person name="Oyama M."/>
            <person name="Hata H."/>
            <person name="Watanabe M."/>
            <person name="Komatsu T."/>
            <person name="Mizushima-Sugano J."/>
            <person name="Satoh T."/>
            <person name="Shirai Y."/>
            <person name="Takahashi Y."/>
            <person name="Nakagawa K."/>
            <person name="Okumura K."/>
            <person name="Nagase T."/>
            <person name="Nomura N."/>
            <person name="Kikuchi H."/>
            <person name="Masuho Y."/>
            <person name="Yamashita R."/>
            <person name="Nakai K."/>
            <person name="Yada T."/>
            <person name="Nakamura Y."/>
            <person name="Ohara O."/>
            <person name="Isogai T."/>
            <person name="Sugano S."/>
        </authorList>
    </citation>
    <scope>NUCLEOTIDE SEQUENCE [LARGE SCALE MRNA]</scope>
    <source>
        <tissue>Heart</tissue>
    </source>
</reference>
<reference key="4">
    <citation type="submission" date="2004-06" db="EMBL/GenBank/DDBJ databases">
        <title>Cloning of human full open reading frames in Gateway(TM) system entry vector (pDONR201).</title>
        <authorList>
            <person name="Ebert L."/>
            <person name="Schick M."/>
            <person name="Neubert P."/>
            <person name="Schatten R."/>
            <person name="Henze S."/>
            <person name="Korn B."/>
        </authorList>
    </citation>
    <scope>NUCLEOTIDE SEQUENCE [LARGE SCALE MRNA]</scope>
</reference>
<reference key="5">
    <citation type="journal article" date="2006" name="Nature">
        <title>DNA sequence of human chromosome 17 and analysis of rearrangement in the human lineage.</title>
        <authorList>
            <person name="Zody M.C."/>
            <person name="Garber M."/>
            <person name="Adams D.J."/>
            <person name="Sharpe T."/>
            <person name="Harrow J."/>
            <person name="Lupski J.R."/>
            <person name="Nicholson C."/>
            <person name="Searle S.M."/>
            <person name="Wilming L."/>
            <person name="Young S.K."/>
            <person name="Abouelleil A."/>
            <person name="Allen N.R."/>
            <person name="Bi W."/>
            <person name="Bloom T."/>
            <person name="Borowsky M.L."/>
            <person name="Bugalter B.E."/>
            <person name="Butler J."/>
            <person name="Chang J.L."/>
            <person name="Chen C.-K."/>
            <person name="Cook A."/>
            <person name="Corum B."/>
            <person name="Cuomo C.A."/>
            <person name="de Jong P.J."/>
            <person name="DeCaprio D."/>
            <person name="Dewar K."/>
            <person name="FitzGerald M."/>
            <person name="Gilbert J."/>
            <person name="Gibson R."/>
            <person name="Gnerre S."/>
            <person name="Goldstein S."/>
            <person name="Grafham D.V."/>
            <person name="Grocock R."/>
            <person name="Hafez N."/>
            <person name="Hagopian D.S."/>
            <person name="Hart E."/>
            <person name="Norman C.H."/>
            <person name="Humphray S."/>
            <person name="Jaffe D.B."/>
            <person name="Jones M."/>
            <person name="Kamal M."/>
            <person name="Khodiyar V.K."/>
            <person name="LaButti K."/>
            <person name="Laird G."/>
            <person name="Lehoczky J."/>
            <person name="Liu X."/>
            <person name="Lokyitsang T."/>
            <person name="Loveland J."/>
            <person name="Lui A."/>
            <person name="Macdonald P."/>
            <person name="Major J.E."/>
            <person name="Matthews L."/>
            <person name="Mauceli E."/>
            <person name="McCarroll S.A."/>
            <person name="Mihalev A.H."/>
            <person name="Mudge J."/>
            <person name="Nguyen C."/>
            <person name="Nicol R."/>
            <person name="O'Leary S.B."/>
            <person name="Osoegawa K."/>
            <person name="Schwartz D.C."/>
            <person name="Shaw-Smith C."/>
            <person name="Stankiewicz P."/>
            <person name="Steward C."/>
            <person name="Swarbreck D."/>
            <person name="Venkataraman V."/>
            <person name="Whittaker C.A."/>
            <person name="Yang X."/>
            <person name="Zimmer A.R."/>
            <person name="Bradley A."/>
            <person name="Hubbard T."/>
            <person name="Birren B.W."/>
            <person name="Rogers J."/>
            <person name="Lander E.S."/>
            <person name="Nusbaum C."/>
        </authorList>
    </citation>
    <scope>NUCLEOTIDE SEQUENCE [LARGE SCALE GENOMIC DNA]</scope>
</reference>
<reference key="6">
    <citation type="submission" date="2005-07" db="EMBL/GenBank/DDBJ databases">
        <authorList>
            <person name="Mural R.J."/>
            <person name="Istrail S."/>
            <person name="Sutton G.G."/>
            <person name="Florea L."/>
            <person name="Halpern A.L."/>
            <person name="Mobarry C.M."/>
            <person name="Lippert R."/>
            <person name="Walenz B."/>
            <person name="Shatkay H."/>
            <person name="Dew I."/>
            <person name="Miller J.R."/>
            <person name="Flanigan M.J."/>
            <person name="Edwards N.J."/>
            <person name="Bolanos R."/>
            <person name="Fasulo D."/>
            <person name="Halldorsson B.V."/>
            <person name="Hannenhalli S."/>
            <person name="Turner R."/>
            <person name="Yooseph S."/>
            <person name="Lu F."/>
            <person name="Nusskern D.R."/>
            <person name="Shue B.C."/>
            <person name="Zheng X.H."/>
            <person name="Zhong F."/>
            <person name="Delcher A.L."/>
            <person name="Huson D.H."/>
            <person name="Kravitz S.A."/>
            <person name="Mouchard L."/>
            <person name="Reinert K."/>
            <person name="Remington K.A."/>
            <person name="Clark A.G."/>
            <person name="Waterman M.S."/>
            <person name="Eichler E.E."/>
            <person name="Adams M.D."/>
            <person name="Hunkapiller M.W."/>
            <person name="Myers E.W."/>
            <person name="Venter J.C."/>
        </authorList>
    </citation>
    <scope>NUCLEOTIDE SEQUENCE [LARGE SCALE GENOMIC DNA]</scope>
</reference>
<reference key="7">
    <citation type="journal article" date="2004" name="Genome Res.">
        <title>The status, quality, and expansion of the NIH full-length cDNA project: the Mammalian Gene Collection (MGC).</title>
        <authorList>
            <consortium name="The MGC Project Team"/>
        </authorList>
    </citation>
    <scope>NUCLEOTIDE SEQUENCE [LARGE SCALE MRNA]</scope>
    <source>
        <tissue>Lymph</tissue>
        <tissue>Placenta</tissue>
        <tissue>Skin</tissue>
    </source>
</reference>
<reference key="8">
    <citation type="submission" date="2006-05" db="UniProtKB">
        <authorList>
            <person name="Bienvenut W.V."/>
            <person name="Kanor S."/>
            <person name="Tissot J.-D."/>
            <person name="Quadroni M."/>
        </authorList>
    </citation>
    <scope>PROTEIN SEQUENCE OF 2-14</scope>
    <scope>CLEAVAGE OF INITIATOR METHIONINE</scope>
    <scope>ACETYLATION AT ALA-2</scope>
    <scope>IDENTIFICATION BY MASS SPECTROMETRY</scope>
    <source>
        <tissue>T-cell</tissue>
    </source>
</reference>
<reference key="9">
    <citation type="submission" date="2007-03" db="UniProtKB">
        <authorList>
            <person name="Lubec G."/>
            <person name="Vishwanath V."/>
        </authorList>
    </citation>
    <scope>PROTEIN SEQUENCE OF 340-358</scope>
    <scope>IDENTIFICATION BY MASS SPECTROMETRY</scope>
    <source>
        <tissue>Brain</tissue>
        <tissue>Cajal-Retzius cell</tissue>
    </source>
</reference>
<reference key="10">
    <citation type="journal article" date="2000" name="Biochem. Biophys. Res. Commun.">
        <title>A human common nuclear matrix protein homologous to eukaryotic translation initiation factor 4A.</title>
        <authorList>
            <person name="Holzmann K."/>
            <person name="Gerner C."/>
            <person name="Poeltl A."/>
            <person name="Schaefer R."/>
            <person name="Obrist P."/>
            <person name="Ensinger C."/>
            <person name="Grimm R."/>
            <person name="Sauermann G."/>
        </authorList>
    </citation>
    <scope>PARTIAL PROTEIN SEQUENCE</scope>
    <scope>SUBCELLULAR LOCATION</scope>
    <scope>TISSUE SPECIFICITY</scope>
    <source>
        <tissue>Leukocyte</tissue>
    </source>
</reference>
<reference key="11">
    <citation type="journal article" date="2002" name="RNA">
        <title>Purification and characterization of native spliceosomes suitable for three-dimensional structural analysis.</title>
        <authorList>
            <person name="Jurica M.S."/>
            <person name="Licklider L.J."/>
            <person name="Gygi S.P."/>
            <person name="Grigorieff N."/>
            <person name="Moore M.J."/>
        </authorList>
    </citation>
    <scope>IDENTIFICATION BY MASS SPECTROMETRY</scope>
    <scope>IDENTIFICATION IN THE SPLICEOSOMAL C COMPLEX</scope>
    <scope>FUNCTION</scope>
    <scope>SUBCELLULAR LOCATION</scope>
    <scope>SUBUNIT</scope>
</reference>
<reference key="12">
    <citation type="journal article" date="2004" name="Nat. Struct. Mol. Biol.">
        <title>eIF4AIII binds spliced mRNA in the exon junction complex and is essential for nonsense-mediated decay.</title>
        <authorList>
            <person name="Shibuya T."/>
            <person name="Tange T.O."/>
            <person name="Sonenberg N."/>
            <person name="Moore M.J."/>
        </authorList>
    </citation>
    <scope>FUNCTION IN MRNA SPLICING AND NONSENSE-MEDIATED MRNA DECAY</scope>
    <scope>INTERACTION WITH MAGOH AND RBM8A</scope>
    <scope>RNA-BINDING</scope>
</reference>
<reference key="13">
    <citation type="journal article" date="2004" name="RNA">
        <title>eIF4A3 is a novel component of the exon junction complex.</title>
        <authorList>
            <person name="Chan C.C."/>
            <person name="Dostie J."/>
            <person name="Diem M.D."/>
            <person name="Feng W."/>
            <person name="Mann M."/>
            <person name="Rappsilber J."/>
            <person name="Dreyfuss G."/>
        </authorList>
    </citation>
    <scope>IDENTIFICATION BY MASS SPECTROMETRY</scope>
    <scope>IDENTIFICATION IN THE EXON JUNCTION COMPLEX</scope>
    <scope>INTERACTION WITH NXF1 AND ALYREF/THOC4</scope>
    <scope>RNA-BINDING</scope>
    <scope>SUBCELLULAR LOCATION</scope>
</reference>
<reference key="14">
    <citation type="journal article" date="2005" name="Gene">
        <title>Identification of NOM1, a nucleolar, eIF4A binding protein encoded within the chromosome 7q36 breakpoint region targeted in cases of pediatric acute myeloid leukemia.</title>
        <authorList>
            <person name="Simmons H.M."/>
            <person name="Ruis B.L."/>
            <person name="Kapoor M."/>
            <person name="Hudacek A.W."/>
            <person name="Conklin K.F."/>
        </authorList>
    </citation>
    <scope>POSSIBLE INTERACTION WITH NOM1</scope>
</reference>
<reference key="15">
    <citation type="journal article" date="2005" name="Mol. Cell">
        <title>Exon-junction complex components specify distinct routes of nonsense-mediated mRNA decay with differential cofactor requirements.</title>
        <authorList>
            <person name="Gehring N.H."/>
            <person name="Kunz J.B."/>
            <person name="Neu-Yilik G."/>
            <person name="Breit S."/>
            <person name="Viegas M.H."/>
            <person name="Hentze M.W."/>
            <person name="Kulozik A.E."/>
        </authorList>
    </citation>
    <scope>FUNCTION</scope>
</reference>
<reference key="16">
    <citation type="journal article" date="2005" name="Nat. Struct. Mol. Biol.">
        <title>The exon junction core complex is locked onto RNA by inhibition of eIF4AIII ATPase activity.</title>
        <authorList>
            <person name="Ballut L."/>
            <person name="Marchadier B."/>
            <person name="Baguet A."/>
            <person name="Tomasetto C."/>
            <person name="Seraphin B."/>
            <person name="Le Hir H."/>
        </authorList>
    </citation>
    <scope>FUNCTION</scope>
    <scope>CATALYTIC ACTIVITY</scope>
    <scope>IDENTIFICATION IN THE CORE EXON JUNCTION COMPLEX</scope>
    <scope>INTERACTION WITH CASC3</scope>
    <scope>MUTAGENESIS OF LYS-88</scope>
    <scope>RNA-BINDING</scope>
</reference>
<reference key="17">
    <citation type="journal article" date="2005" name="RNA">
        <title>Biochemical analysis of the EJC reveals two new factors and a stable tetrameric protein core.</title>
        <authorList>
            <person name="Tange T.O."/>
            <person name="Shibuya T."/>
            <person name="Jurica M.S."/>
            <person name="Moore M.J."/>
        </authorList>
    </citation>
    <scope>IDENTIFICATION IN THE CORE EXON JUNCTION COMPLEX</scope>
    <scope>IDENTIFICATION IN A MRNA SPLICING-DEPENDENT EXON JUNCTION COMPLEX</scope>
    <scope>IDENTIFICATION BY MASS SPECTROMETRY</scope>
</reference>
<reference key="18">
    <citation type="journal article" date="2006" name="Cell">
        <title>Global, in vivo, and site-specific phosphorylation dynamics in signaling networks.</title>
        <authorList>
            <person name="Olsen J.V."/>
            <person name="Blagoev B."/>
            <person name="Gnad F."/>
            <person name="Macek B."/>
            <person name="Kumar C."/>
            <person name="Mortensen P."/>
            <person name="Mann M."/>
        </authorList>
    </citation>
    <scope>IDENTIFICATION BY MASS SPECTROMETRY [LARGE SCALE ANALYSIS]</scope>
    <source>
        <tissue>Cervix carcinoma</tissue>
    </source>
</reference>
<reference key="19">
    <citation type="journal article" date="2006" name="RNA">
        <title>Mutational analysis of human eIF4AIII identifies regions necessary for exon junction complex formation and nonsense-mediated mRNA decay.</title>
        <authorList>
            <person name="Shibuya T."/>
            <person name="Tange T.O."/>
            <person name="Stroupe M.E."/>
            <person name="Moore M.J."/>
        </authorList>
    </citation>
    <scope>INTERACTION WITH CASC3 AND MAGOH</scope>
    <scope>MUTAGENESIS</scope>
</reference>
<reference key="20">
    <citation type="journal article" date="2007" name="PLoS ONE">
        <title>MLN51 stimulates the RNA-helicase activity of eIF4AIII.</title>
        <authorList>
            <person name="Noble C.G."/>
            <person name="Song H."/>
        </authorList>
    </citation>
    <scope>FUNCTION IN ATPASE AND RNA-HELICASE ACTIVITY</scope>
    <scope>CATALYTIC ACTIVITY</scope>
</reference>
<reference key="21">
    <citation type="journal article" date="2008" name="Cell">
        <title>SKAR links pre-mRNA splicing to mTOR/S6K1-mediated enhanced translation efficiency of spliced mRNAs.</title>
        <authorList>
            <person name="Ma X.M."/>
            <person name="Yoon S.O."/>
            <person name="Richardson C.J."/>
            <person name="Julich K."/>
            <person name="Blenis J."/>
        </authorList>
    </citation>
    <scope>INTERACTION WITH POLDIP3</scope>
</reference>
<reference key="22">
    <citation type="journal article" date="2008" name="Mol. Cell">
        <title>Kinase-selective enrichment enables quantitative phosphoproteomics of the kinome across the cell cycle.</title>
        <authorList>
            <person name="Daub H."/>
            <person name="Olsen J.V."/>
            <person name="Bairlein M."/>
            <person name="Gnad F."/>
            <person name="Oppermann F.S."/>
            <person name="Korner R."/>
            <person name="Greff Z."/>
            <person name="Keri G."/>
            <person name="Stemmann O."/>
            <person name="Mann M."/>
        </authorList>
    </citation>
    <scope>IDENTIFICATION BY MASS SPECTROMETRY [LARGE SCALE ANALYSIS]</scope>
    <source>
        <tissue>Cervix carcinoma</tissue>
    </source>
</reference>
<reference key="23">
    <citation type="journal article" date="2008" name="Proc. Natl. Acad. Sci. U.S.A.">
        <title>A quantitative atlas of mitotic phosphorylation.</title>
        <authorList>
            <person name="Dephoure N."/>
            <person name="Zhou C."/>
            <person name="Villen J."/>
            <person name="Beausoleil S.A."/>
            <person name="Bakalarski C.E."/>
            <person name="Elledge S.J."/>
            <person name="Gygi S.P."/>
        </authorList>
    </citation>
    <scope>PHOSPHORYLATION [LARGE SCALE ANALYSIS] AT THR-163</scope>
    <scope>IDENTIFICATION BY MASS SPECTROMETRY [LARGE SCALE ANALYSIS]</scope>
    <source>
        <tissue>Cervix carcinoma</tissue>
    </source>
</reference>
<reference key="24">
    <citation type="journal article" date="2009" name="Anal. Chem.">
        <title>Lys-N and trypsin cover complementary parts of the phosphoproteome in a refined SCX-based approach.</title>
        <authorList>
            <person name="Gauci S."/>
            <person name="Helbig A.O."/>
            <person name="Slijper M."/>
            <person name="Krijgsveld J."/>
            <person name="Heck A.J."/>
            <person name="Mohammed S."/>
        </authorList>
    </citation>
    <scope>ACETYLATION [LARGE SCALE ANALYSIS] AT ALA-2</scope>
    <scope>CLEAVAGE OF INITIATOR METHIONINE [LARGE SCALE ANALYSIS]</scope>
    <scope>IDENTIFICATION BY MASS SPECTROMETRY [LARGE SCALE ANALYSIS]</scope>
</reference>
<reference key="25">
    <citation type="journal article" date="2009" name="Biochem. Biophys. Res. Commun.">
        <title>Exon junction complex enhances translation of spliced mRNAs at multiple steps.</title>
        <authorList>
            <person name="Lee H.C."/>
            <person name="Choe J."/>
            <person name="Chi S.G."/>
            <person name="Kim Y.K."/>
        </authorList>
    </citation>
    <scope>FUNCTION IN MRNA TRANSLATION</scope>
</reference>
<reference key="26">
    <citation type="journal article" date="2009" name="Mol. Cell. Proteomics">
        <title>Large-scale proteomics analysis of the human kinome.</title>
        <authorList>
            <person name="Oppermann F.S."/>
            <person name="Gnad F."/>
            <person name="Olsen J.V."/>
            <person name="Hornberger R."/>
            <person name="Greff Z."/>
            <person name="Keri G."/>
            <person name="Mann M."/>
            <person name="Daub H."/>
        </authorList>
    </citation>
    <scope>ACETYLATION [LARGE SCALE ANALYSIS] AT ALA-2</scope>
    <scope>CLEAVAGE OF INITIATOR METHIONINE [LARGE SCALE ANALYSIS]</scope>
    <scope>IDENTIFICATION BY MASS SPECTROMETRY [LARGE SCALE ANALYSIS]</scope>
</reference>
<reference key="27">
    <citation type="journal article" date="2009" name="Science">
        <title>Lysine acetylation targets protein complexes and co-regulates major cellular functions.</title>
        <authorList>
            <person name="Choudhary C."/>
            <person name="Kumar C."/>
            <person name="Gnad F."/>
            <person name="Nielsen M.L."/>
            <person name="Rehman M."/>
            <person name="Walther T.C."/>
            <person name="Olsen J.V."/>
            <person name="Mann M."/>
        </authorList>
    </citation>
    <scope>ACETYLATION [LARGE SCALE ANALYSIS] AT LYS-296 AND LYS-321</scope>
    <scope>IDENTIFICATION BY MASS SPECTROMETRY [LARGE SCALE ANALYSIS]</scope>
</reference>
<reference key="28">
    <citation type="journal article" date="2010" name="Sci. Signal.">
        <title>Quantitative phosphoproteomics reveals widespread full phosphorylation site occupancy during mitosis.</title>
        <authorList>
            <person name="Olsen J.V."/>
            <person name="Vermeulen M."/>
            <person name="Santamaria A."/>
            <person name="Kumar C."/>
            <person name="Miller M.L."/>
            <person name="Jensen L.J."/>
            <person name="Gnad F."/>
            <person name="Cox J."/>
            <person name="Jensen T.S."/>
            <person name="Nigg E.A."/>
            <person name="Brunak S."/>
            <person name="Mann M."/>
        </authorList>
    </citation>
    <scope>ACETYLATION [LARGE SCALE ANALYSIS] AT MET-1 AND ALA-2</scope>
    <scope>PHOSPHORYLATION [LARGE SCALE ANALYSIS] AT SER-12 AND THR-163</scope>
    <scope>CLEAVAGE OF INITIATOR METHIONINE [LARGE SCALE ANALYSIS]</scope>
    <scope>IDENTIFICATION BY MASS SPECTROMETRY [LARGE SCALE ANALYSIS]</scope>
    <source>
        <tissue>Cervix carcinoma</tissue>
    </source>
</reference>
<reference key="29">
    <citation type="journal article" date="2011" name="BMC Syst. Biol.">
        <title>Initial characterization of the human central proteome.</title>
        <authorList>
            <person name="Burkard T.R."/>
            <person name="Planyavsky M."/>
            <person name="Kaupe I."/>
            <person name="Breitwieser F.P."/>
            <person name="Buerckstuemmer T."/>
            <person name="Bennett K.L."/>
            <person name="Superti-Furga G."/>
            <person name="Colinge J."/>
        </authorList>
    </citation>
    <scope>IDENTIFICATION BY MASS SPECTROMETRY [LARGE SCALE ANALYSIS]</scope>
</reference>
<reference key="30">
    <citation type="journal article" date="2011" name="Sci. Signal.">
        <title>System-wide temporal characterization of the proteome and phosphoproteome of human embryonic stem cell differentiation.</title>
        <authorList>
            <person name="Rigbolt K.T."/>
            <person name="Prokhorova T.A."/>
            <person name="Akimov V."/>
            <person name="Henningsen J."/>
            <person name="Johansen P.T."/>
            <person name="Kratchmarova I."/>
            <person name="Kassem M."/>
            <person name="Mann M."/>
            <person name="Olsen J.V."/>
            <person name="Blagoev B."/>
        </authorList>
    </citation>
    <scope>ACETYLATION [LARGE SCALE ANALYSIS] AT MET-1 AND ALA-2</scope>
    <scope>PHOSPHORYLATION [LARGE SCALE ANALYSIS] AT SER-12</scope>
    <scope>CLEAVAGE OF INITIATOR METHIONINE [LARGE SCALE ANALYSIS]</scope>
    <scope>IDENTIFICATION BY MASS SPECTROMETRY [LARGE SCALE ANALYSIS]</scope>
</reference>
<reference key="31">
    <citation type="journal article" date="2012" name="Cell Rep.">
        <title>CWC22 connects pre-mRNA splicing and exon junction complex assembly.</title>
        <authorList>
            <person name="Steckelberg A.L."/>
            <person name="Boehm V."/>
            <person name="Gromadzka A.M."/>
            <person name="Gehring N.H."/>
        </authorList>
    </citation>
    <scope>INTERACTION WITH CWC22</scope>
    <scope>MUTAGENESIS OF ASP-270; ASP-273; 276-THR-ILE-277 AND 301-ASN--THR-303</scope>
</reference>
<reference key="32">
    <citation type="journal article" date="2012" name="Mol. Cell. Biol.">
        <title>Proteins associated with the exon junction complex also control the alternative splicing of apoptotic regulators.</title>
        <authorList>
            <person name="Michelle L."/>
            <person name="Cloutier A."/>
            <person name="Toutant J."/>
            <person name="Shkreta L."/>
            <person name="Thibault P."/>
            <person name="Durand M."/>
            <person name="Garneau D."/>
            <person name="Gendron D."/>
            <person name="Lapointe E."/>
            <person name="Couture S."/>
            <person name="Le Hir H."/>
            <person name="Klinck R."/>
            <person name="Elela S.A."/>
            <person name="Prinos P."/>
            <person name="Chabot B."/>
        </authorList>
    </citation>
    <scope>FUNCTION</scope>
</reference>
<reference key="33">
    <citation type="journal article" date="2012" name="Mol. Cell. Proteomics">
        <title>Comparative large-scale characterisation of plant vs. mammal proteins reveals similar and idiosyncratic N-alpha acetylation features.</title>
        <authorList>
            <person name="Bienvenut W.V."/>
            <person name="Sumpton D."/>
            <person name="Martinez A."/>
            <person name="Lilla S."/>
            <person name="Espagne C."/>
            <person name="Meinnel T."/>
            <person name="Giglione C."/>
        </authorList>
    </citation>
    <scope>ACETYLATION [LARGE SCALE ANALYSIS] AT ALA-2</scope>
    <scope>CLEAVAGE OF INITIATOR METHIONINE [LARGE SCALE ANALYSIS]</scope>
    <scope>IDENTIFICATION BY MASS SPECTROMETRY [LARGE SCALE ANALYSIS]</scope>
</reference>
<reference key="34">
    <citation type="journal article" date="2012" name="Nat. Struct. Mol. Biol.">
        <title>Human CWC22 escorts the helicase eIF4AIII to spliceosomes and promotes exon junction complex assembly.</title>
        <authorList>
            <person name="Barbosa I."/>
            <person name="Haque N."/>
            <person name="Fiorini F."/>
            <person name="Barrandon C."/>
            <person name="Tomasetto C."/>
            <person name="Blanchette M."/>
            <person name="Le Hir H."/>
        </authorList>
    </citation>
    <scope>FUNCTION</scope>
    <scope>CATALYTIC ACTIVITY</scope>
    <scope>ACTIVITY REGULATION</scope>
    <scope>IDENTIFICATION IN THE SPLICEOSOME C COMPLEX</scope>
    <scope>INTERACTION WITH CASC3; CWC22; MAGOH; PRPF19 AND RBM8A</scope>
    <scope>SUBCELLULAR LOCATION</scope>
    <scope>MUTAGENESIS OF ASP-401 AND GLU-402</scope>
</reference>
<reference key="35">
    <citation type="journal article" date="2012" name="Proc. Natl. Acad. Sci. U.S.A.">
        <title>N-terminal acetylome analyses and functional insights of the N-terminal acetyltransferase NatB.</title>
        <authorList>
            <person name="Van Damme P."/>
            <person name="Lasa M."/>
            <person name="Polevoda B."/>
            <person name="Gazquez C."/>
            <person name="Elosegui-Artola A."/>
            <person name="Kim D.S."/>
            <person name="De Juan-Pardo E."/>
            <person name="Demeyer K."/>
            <person name="Hole K."/>
            <person name="Larrea E."/>
            <person name="Timmerman E."/>
            <person name="Prieto J."/>
            <person name="Arnesen T."/>
            <person name="Sherman F."/>
            <person name="Gevaert K."/>
            <person name="Aldabe R."/>
        </authorList>
    </citation>
    <scope>ACETYLATION [LARGE SCALE ANALYSIS] AT ALA-2</scope>
    <scope>CLEAVAGE OF INITIATOR METHIONINE [LARGE SCALE ANALYSIS]</scope>
    <scope>IDENTIFICATION BY MASS SPECTROMETRY [LARGE SCALE ANALYSIS]</scope>
</reference>
<reference key="36">
    <citation type="journal article" date="2012" name="Proc. Natl. Acad. Sci. U.S.A.">
        <title>Human spliceosomal protein CWC22 plays a role in coupling splicing to exon junction complex deposition and nonsense-mediated decay.</title>
        <authorList>
            <person name="Alexandrov A."/>
            <person name="Colognori D."/>
            <person name="Shu M.D."/>
            <person name="Steitz J.A."/>
        </authorList>
    </citation>
    <scope>INTERACTION WITH CWC22</scope>
    <scope>MUTAGENESIS OF THR-334</scope>
</reference>
<reference key="37">
    <citation type="journal article" date="2013" name="J. Proteome Res.">
        <title>Toward a comprehensive characterization of a human cancer cell phosphoproteome.</title>
        <authorList>
            <person name="Zhou H."/>
            <person name="Di Palma S."/>
            <person name="Preisinger C."/>
            <person name="Peng M."/>
            <person name="Polat A.N."/>
            <person name="Heck A.J."/>
            <person name="Mohammed S."/>
        </authorList>
    </citation>
    <scope>PHOSPHORYLATION [LARGE SCALE ANALYSIS] AT SER-12 AND THR-163</scope>
    <scope>IDENTIFICATION BY MASS SPECTROMETRY [LARGE SCALE ANALYSIS]</scope>
    <source>
        <tissue>Cervix carcinoma</tissue>
        <tissue>Erythroleukemia</tissue>
    </source>
</reference>
<reference key="38">
    <citation type="journal article" date="2013" name="RNA Biol.">
        <title>Two mammalian MAGOH genes contribute to exon junction complex composition and nonsense-mediated decay.</title>
        <authorList>
            <person name="Singh K.K."/>
            <person name="Wachsmuth L."/>
            <person name="Kulozik A.E."/>
            <person name="Gehring N.H."/>
        </authorList>
    </citation>
    <scope>IDENTIFICATION IN THE EXON JUNCTION COMPLEX</scope>
</reference>
<reference key="39">
    <citation type="journal article" date="2014" name="Am. J. Hum. Genet.">
        <title>A noncoding expansion in EIF4A3 causes Richieri-Costa-Pereira syndrome, a craniofacial disorder associated with limb defects.</title>
        <authorList>
            <person name="Favaro F.P."/>
            <person name="Alvizi L."/>
            <person name="Zechi-Ceide R.M."/>
            <person name="Bertola D."/>
            <person name="Felix T.M."/>
            <person name="de Souza J."/>
            <person name="Raskin S."/>
            <person name="Twigg S.R."/>
            <person name="Weiner A.M."/>
            <person name="Armas P."/>
            <person name="Margarit E."/>
            <person name="Calcaterra N.B."/>
            <person name="Andersen G.R."/>
            <person name="McGowan S.J."/>
            <person name="Wilkie A.O."/>
            <person name="Richieri-Costa A."/>
            <person name="de Almeida M.L."/>
            <person name="Passos-Bueno M.R."/>
        </authorList>
    </citation>
    <scope>FUNCTION</scope>
    <scope>VARIANT RCPS GLY-270</scope>
</reference>
<reference key="40">
    <citation type="journal article" date="2014" name="Cell Rep.">
        <title>The RNA helicase DHX34 activates NMD by promoting a transition from the surveillance to the decay-inducing complex.</title>
        <authorList>
            <person name="Hug N."/>
            <person name="Caceres J.F."/>
        </authorList>
    </citation>
    <scope>INTERACTION WITH DHX34</scope>
</reference>
<reference key="41">
    <citation type="journal article" date="2014" name="Nat. Struct. Mol. Biol.">
        <title>Uncovering global SUMOylation signaling networks in a site-specific manner.</title>
        <authorList>
            <person name="Hendriks I.A."/>
            <person name="D'Souza R.C."/>
            <person name="Yang B."/>
            <person name="Verlaan-de Vries M."/>
            <person name="Mann M."/>
            <person name="Vertegaal A.C."/>
        </authorList>
    </citation>
    <scope>SUMOYLATION [LARGE SCALE ANALYSIS] AT LYS-19</scope>
    <scope>IDENTIFICATION BY MASS SPECTROMETRY [LARGE SCALE ANALYSIS]</scope>
</reference>
<reference key="42">
    <citation type="journal article" date="2015" name="Cell Rep.">
        <title>SUMO-2 orchestrates chromatin modifiers in response to DNA damage.</title>
        <authorList>
            <person name="Hendriks I.A."/>
            <person name="Treffers L.W."/>
            <person name="Verlaan-de Vries M."/>
            <person name="Olsen J.V."/>
            <person name="Vertegaal A.C."/>
        </authorList>
    </citation>
    <scope>SUMOYLATION [LARGE SCALE ANALYSIS] AT LYS-19</scope>
    <scope>IDENTIFICATION BY MASS SPECTROMETRY [LARGE SCALE ANALYSIS]</scope>
</reference>
<reference key="43">
    <citation type="journal article" date="2015" name="Mol. Cell. Proteomics">
        <title>System-wide analysis of SUMOylation dynamics in response to replication stress reveals novel small ubiquitin-like modified target proteins and acceptor lysines relevant for genome stability.</title>
        <authorList>
            <person name="Xiao Z."/>
            <person name="Chang J.G."/>
            <person name="Hendriks I.A."/>
            <person name="Sigurdsson J.O."/>
            <person name="Olsen J.V."/>
            <person name="Vertegaal A.C."/>
        </authorList>
    </citation>
    <scope>SUMOYLATION [LARGE SCALE ANALYSIS] AT LYS-19</scope>
    <scope>IDENTIFICATION BY MASS SPECTROMETRY [LARGE SCALE ANALYSIS]</scope>
</reference>
<reference key="44">
    <citation type="journal article" date="2015" name="Nat. Commun.">
        <title>mRNA export through an additional cap-binding complex consisting of NCBP1 and NCBP3.</title>
        <authorList>
            <person name="Gebhardt A."/>
            <person name="Habjan M."/>
            <person name="Benda C."/>
            <person name="Meiler A."/>
            <person name="Haas D.A."/>
            <person name="Hein M.Y."/>
            <person name="Mann A."/>
            <person name="Mann M."/>
            <person name="Habermann B."/>
            <person name="Pichlmair A."/>
        </authorList>
    </citation>
    <scope>INTERACTION WITH NCBP3</scope>
</reference>
<reference key="45">
    <citation type="journal article" date="2017" name="Nat. Struct. Mol. Biol.">
        <title>Site-specific mapping of the human SUMO proteome reveals co-modification with phosphorylation.</title>
        <authorList>
            <person name="Hendriks I.A."/>
            <person name="Lyon D."/>
            <person name="Young C."/>
            <person name="Jensen L.J."/>
            <person name="Vertegaal A.C."/>
            <person name="Nielsen M.L."/>
        </authorList>
    </citation>
    <scope>SUMOYLATION [LARGE SCALE ANALYSIS] AT LYS-19; LYS-314 AND LYS-382</scope>
    <scope>IDENTIFICATION BY MASS SPECTROMETRY [LARGE SCALE ANALYSIS]</scope>
</reference>
<reference key="46">
    <citation type="journal article" date="2019" name="RNA">
        <title>Human nuclear RNAi-defective 2 (NRDE2) is an essential RNA splicing factor.</title>
        <authorList>
            <person name="Jiao A.L."/>
            <person name="Perales R."/>
            <person name="Umbreit N.T."/>
            <person name="Haswell J.R."/>
            <person name="Piper M.E."/>
            <person name="Adams B.D."/>
            <person name="Pellman D."/>
            <person name="Kennedy S."/>
            <person name="Slack F.J."/>
        </authorList>
    </citation>
    <scope>INTERACTION WITH NRDE2</scope>
</reference>
<reference evidence="38 39 40" key="47">
    <citation type="journal article" date="2006" name="Cell">
        <title>The crystal structure of the exon junction complex reveals how it maintains a stable grip on mRNA.</title>
        <authorList>
            <person name="Bono F."/>
            <person name="Ebert J."/>
            <person name="Lorentzen E."/>
            <person name="Conti E."/>
        </authorList>
    </citation>
    <scope>X-RAY CRYSTALLOGRAPHY (2.21 ANGSTROMS) OF 2-411 IN THE EJC COMPLEX WITH CASC3; MAGOH; RBM8A; ATP ANALOG AND POLY URACIL</scope>
</reference>
<reference evidence="36 37" key="48">
    <citation type="journal article" date="2006" name="Science">
        <title>Structure of the exon junction core complex with a trapped DEAD-box ATPase bound to RNA.</title>
        <authorList>
            <person name="Andersen C.B."/>
            <person name="Ballut L."/>
            <person name="Johansen J.S."/>
            <person name="Chamieh H."/>
            <person name="Nielsen K.H."/>
            <person name="Oliveira C.L."/>
            <person name="Pedersen J.S."/>
            <person name="Seraphin B."/>
            <person name="Le Hir H."/>
            <person name="Andersen G.R."/>
        </authorList>
    </citation>
    <scope>X-RAY CRYSTALLOGRAPHY (2.3 ANGSTROMS) IN THE EJC COMPLEX WITH CASC3; MAGOH; RBM8A; ATP ANALOG AND POLY URACIL</scope>
</reference>
<reference evidence="42" key="49">
    <citation type="journal article" date="2009" name="RNA">
        <title>Mechanism of ATP turnover inhibition in the EJC.</title>
        <authorList>
            <person name="Nielsen K.H."/>
            <person name="Chamieh H."/>
            <person name="Andersen C.B."/>
            <person name="Fredslund F."/>
            <person name="Hamborg K."/>
            <person name="Le Hir H."/>
            <person name="Andersen G.R."/>
        </authorList>
    </citation>
    <scope>X-RAY CRYSTALLOGRAPHY (2.3 ANGSTROMS) IN THE EJC COMPLEX WITH CASC3; MAGOH; RBM8A; ATP ANALOG AND POLY URACIL</scope>
</reference>
<reference evidence="41" key="50">
    <citation type="journal article" date="2010" name="Proc. Natl. Acad. Sci. U.S.A.">
        <title>Insights into the recruitment of the NMD machinery from the crystal structure of a core EJC-UPF3b complex.</title>
        <authorList>
            <person name="Buchwald G."/>
            <person name="Ebert J."/>
            <person name="Basquin C."/>
            <person name="Sauliere J."/>
            <person name="Jayachandran U."/>
            <person name="Bono F."/>
            <person name="Le Hir H."/>
            <person name="Conti E."/>
        </authorList>
    </citation>
    <scope>X-RAY CRYSTALLOGRAPHY (3.40 ANGSTROMS) IN THE EJC COMPLEX WITH CASC3; MAGOH; RBM8A; UPF3B; UPF2; RNA AND ATP ANALOG</scope>
    <scope>IDENTIFICATION IN THE EJC COMPLEX WITH UPF3A</scope>
</reference>
<reference evidence="43" key="51">
    <citation type="journal article" date="2013" name="Proc. Natl. Acad. Sci. U.S.A.">
        <title>Crystal structure of the human eIF4AIII-CWC22 complex shows how a DEAD-box protein is inhibited by a MIF4G domain.</title>
        <authorList>
            <person name="Buchwald G."/>
            <person name="Schussler S."/>
            <person name="Basquin C."/>
            <person name="Le Hir H."/>
            <person name="Conti E."/>
        </authorList>
    </citation>
    <scope>X-RAY CRYSTALLOGRAPHY (2.00 ANGSTROMS) IN COMPLEX WITH CWC22</scope>
    <scope>MUTAGENESIS OF CYS-99 AND 300-ALA-ASN-301</scope>
</reference>
<reference evidence="45" key="52">
    <citation type="journal article" date="2017" name="Cell">
        <title>An Atomic Structure of the Human Spliceosome.</title>
        <authorList>
            <person name="Zhang X."/>
            <person name="Yan C."/>
            <person name="Hang J."/>
            <person name="Finci L.I."/>
            <person name="Lei J."/>
            <person name="Shi Y."/>
        </authorList>
    </citation>
    <scope>STRUCTURE BY ELECTRON MICROSCOPY (3.60 ANGSTROMS)</scope>
    <scope>FUNCTION</scope>
    <scope>SUBUNIT</scope>
    <scope>SUBCELLULAR LOCATION</scope>
</reference>
<reference evidence="44" key="53">
    <citation type="journal article" date="2017" name="Nature">
        <title>Cryo-EM structure of a human spliceosome activated for step 2 of splicing.</title>
        <authorList>
            <person name="Bertram K."/>
            <person name="Agafonov D.E."/>
            <person name="Liu W.T."/>
            <person name="Dybkov O."/>
            <person name="Will C.L."/>
            <person name="Hartmuth K."/>
            <person name="Urlaub H."/>
            <person name="Kastner B."/>
            <person name="Stark H."/>
            <person name="Luhrmann R."/>
        </authorList>
    </citation>
    <scope>STRUCTURE BY ELECTRON MICROSCOPY (5.90 ANGSTROMS)</scope>
    <scope>FUNCTION</scope>
    <scope>SUBUNIT</scope>
    <scope>SUBCELLULAR LOCATION</scope>
    <scope>IDENTIFICATION BY MASS SPECTROMETRY</scope>
</reference>
<reference evidence="46" key="54">
    <citation type="journal article" date="2018" name="Science">
        <title>Structure of a human catalytic step I spliceosome.</title>
        <authorList>
            <person name="Zhan X."/>
            <person name="Yan C."/>
            <person name="Zhang X."/>
            <person name="Lei J."/>
            <person name="Shi Y."/>
        </authorList>
    </citation>
    <scope>STRUCTURE BY ELECTRON MICROSCOPY (4.10 ANGSTROMS)</scope>
    <scope>FUNCTION</scope>
    <scope>SUBUNIT</scope>
    <scope>SUBCELLULAR LOCATION</scope>
</reference>
<reference evidence="47" key="55">
    <citation type="journal article" date="2023" name="Nature">
        <title>mRNA recognition and packaging by the human transcription-export complex.</title>
        <authorList>
            <person name="Pacheco-Fiallos B."/>
            <person name="Vorlander M.K."/>
            <person name="Riabov-Bassat D."/>
            <person name="Fin L."/>
            <person name="O'Reilly F.J."/>
            <person name="Ayala F.I."/>
            <person name="Schellhaas U."/>
            <person name="Rappsilber J."/>
            <person name="Plaschka C."/>
        </authorList>
    </citation>
    <scope>STRUCTURE BY ELECTRON MICROSCOPY (2.40 ANGSTROMS) OF 23-404 IN COMPLEX WITH THOC4; MAGOH AND RBM8A</scope>
    <scope>SUBUNIT</scope>
</reference>
<keyword id="KW-0002">3D-structure</keyword>
<keyword id="KW-0007">Acetylation</keyword>
<keyword id="KW-0067">ATP-binding</keyword>
<keyword id="KW-0963">Cytoplasm</keyword>
<keyword id="KW-0903">Direct protein sequencing</keyword>
<keyword id="KW-0225">Disease variant</keyword>
<keyword id="KW-0347">Helicase</keyword>
<keyword id="KW-0378">Hydrolase</keyword>
<keyword id="KW-1017">Isopeptide bond</keyword>
<keyword id="KW-0507">mRNA processing</keyword>
<keyword id="KW-0508">mRNA splicing</keyword>
<keyword id="KW-0509">mRNA transport</keyword>
<keyword id="KW-0866">Nonsense-mediated mRNA decay</keyword>
<keyword id="KW-0547">Nucleotide-binding</keyword>
<keyword id="KW-0539">Nucleus</keyword>
<keyword id="KW-0597">Phosphoprotein</keyword>
<keyword id="KW-1267">Proteomics identification</keyword>
<keyword id="KW-1185">Reference proteome</keyword>
<keyword id="KW-0694">RNA-binding</keyword>
<keyword id="KW-0698">rRNA processing</keyword>
<keyword id="KW-0747">Spliceosome</keyword>
<keyword id="KW-0810">Translation regulation</keyword>
<keyword id="KW-0813">Transport</keyword>
<keyword id="KW-0832">Ubl conjugation</keyword>
<accession>P38919</accession>
<accession>Q15033</accession>
<accession>Q6IBQ2</accession>
<accession>Q96A18</accession>
<protein>
    <recommendedName>
        <fullName>Eukaryotic initiation factor 4A-III</fullName>
        <shortName>eIF-4A-III</shortName>
        <shortName>eIF4A-III</shortName>
        <ecNumber evidence="10 16 23">3.6.4.13</ecNumber>
    </recommendedName>
    <alternativeName>
        <fullName>ATP-dependent RNA helicase DDX48</fullName>
    </alternativeName>
    <alternativeName>
        <fullName>ATP-dependent RNA helicase eIF4A-3</fullName>
    </alternativeName>
    <alternativeName>
        <fullName>DEAD box protein 48</fullName>
    </alternativeName>
    <alternativeName>
        <fullName>Eukaryotic initiation factor 4A-like NUK-34</fullName>
    </alternativeName>
    <alternativeName>
        <fullName>Eukaryotic translation initiation factor 4A isoform 3</fullName>
    </alternativeName>
    <alternativeName>
        <fullName>Nuclear matrix protein 265</fullName>
        <shortName>NMP 265</shortName>
        <shortName>hNMP 265</shortName>
    </alternativeName>
    <component>
        <recommendedName>
            <fullName>Eukaryotic initiation factor 4A-III, N-terminally processed</fullName>
        </recommendedName>
    </component>
</protein>
<feature type="chain" id="PRO_0000423267" description="Eukaryotic initiation factor 4A-III">
    <location>
        <begin position="1"/>
        <end position="411"/>
    </location>
</feature>
<feature type="initiator methionine" description="Removed; alternate" evidence="34 49 50 52 53 54 55">
    <location>
        <position position="1"/>
    </location>
</feature>
<feature type="chain" id="PRO_0000054942" description="Eukaryotic initiation factor 4A-III, N-terminally processed">
    <location>
        <begin position="2"/>
        <end position="411"/>
    </location>
</feature>
<feature type="domain" description="Helicase ATP-binding" evidence="4">
    <location>
        <begin position="69"/>
        <end position="239"/>
    </location>
</feature>
<feature type="domain" description="Helicase C-terminal" evidence="5">
    <location>
        <begin position="250"/>
        <end position="411"/>
    </location>
</feature>
<feature type="short sequence motif" description="Q motif">
    <location>
        <begin position="38"/>
        <end position="66"/>
    </location>
</feature>
<feature type="short sequence motif" description="DEAD box" evidence="35">
    <location>
        <begin position="187"/>
        <end position="190"/>
    </location>
</feature>
<feature type="binding site" evidence="14 15 18 20 37 38 39 41 42">
    <location>
        <position position="60"/>
    </location>
    <ligand>
        <name>ATP</name>
        <dbReference type="ChEBI" id="CHEBI:30616"/>
    </ligand>
</feature>
<feature type="binding site" evidence="14 15 18 20 37 38 39 41 42">
    <location>
        <position position="65"/>
    </location>
    <ligand>
        <name>ATP</name>
        <dbReference type="ChEBI" id="CHEBI:30616"/>
    </ligand>
</feature>
<feature type="binding site" evidence="14 15 18 20 37 38 39 41 42">
    <location>
        <begin position="85"/>
        <end position="90"/>
    </location>
    <ligand>
        <name>ATP</name>
        <dbReference type="ChEBI" id="CHEBI:30616"/>
    </ligand>
</feature>
<feature type="binding site" evidence="14 15 18 20 37 38 39 41 42">
    <location>
        <position position="342"/>
    </location>
    <ligand>
        <name>ATP</name>
        <dbReference type="ChEBI" id="CHEBI:30616"/>
    </ligand>
</feature>
<feature type="binding site" evidence="14 15 18 20 37 38 39 41 42">
    <location>
        <begin position="367"/>
        <end position="371"/>
    </location>
    <ligand>
        <name>ATP</name>
        <dbReference type="ChEBI" id="CHEBI:30616"/>
    </ligand>
</feature>
<feature type="modified residue" description="N-acetylmethionine" evidence="52 53">
    <location>
        <position position="1"/>
    </location>
</feature>
<feature type="modified residue" description="N-acetylalanine; in Eukaryotic initiation factor 4A-III, N-terminally processed" evidence="34 49 50 52 53 54 55">
    <location>
        <position position="2"/>
    </location>
</feature>
<feature type="modified residue" description="Phosphoserine" evidence="1">
    <location>
        <position position="10"/>
    </location>
</feature>
<feature type="modified residue" description="Phosphoserine" evidence="52 53 56">
    <location>
        <position position="12"/>
    </location>
</feature>
<feature type="modified residue" description="N6-acetyllysine" evidence="1">
    <location>
        <position position="124"/>
    </location>
</feature>
<feature type="modified residue" description="Phosphothreonine" evidence="48 52 56">
    <location>
        <position position="163"/>
    </location>
</feature>
<feature type="modified residue" description="N6-acetyllysine" evidence="2">
    <location>
        <position position="198"/>
    </location>
</feature>
<feature type="modified residue" description="N6-acetyllysine" evidence="51">
    <location>
        <position position="296"/>
    </location>
</feature>
<feature type="modified residue" description="N6-acetyllysine" evidence="51">
    <location>
        <position position="321"/>
    </location>
</feature>
<feature type="cross-link" description="Glycyl lysine isopeptide (Lys-Gly) (interchain with G-Cter in SUMO2)" evidence="57 58 59 60">
    <location>
        <position position="19"/>
    </location>
</feature>
<feature type="cross-link" description="Glycyl lysine isopeptide (Lys-Gly) (interchain with G-Cter in SUMO2)" evidence="1">
    <location>
        <position position="152"/>
    </location>
</feature>
<feature type="cross-link" description="Glycyl lysine isopeptide (Lys-Gly) (interchain with G-Cter in SUMO2)" evidence="60">
    <location>
        <position position="314"/>
    </location>
</feature>
<feature type="cross-link" description="Glycyl lysine isopeptide (Lys-Gly) (interchain with G-Cter in SUMO2)" evidence="1">
    <location>
        <position position="374"/>
    </location>
</feature>
<feature type="cross-link" description="Glycyl lysine isopeptide (Lys-Gly) (interchain with G-Cter in SUMO2)" evidence="60">
    <location>
        <position position="382"/>
    </location>
</feature>
<feature type="sequence variant" id="VAR_071090" description="In RCPS; dbSNP:rs587777204." evidence="27">
    <original>D</original>
    <variation>G</variation>
    <location>
        <position position="270"/>
    </location>
</feature>
<feature type="mutagenesis site" description="ATPase activity is not increased by the presence of CASC3. Does not prevent EJC formation. Prevents the EJC disassembly." evidence="10">
    <original>K</original>
    <variation>A</variation>
    <location>
        <position position="88"/>
    </location>
</feature>
<feature type="mutagenesis site" description="No effect on interaction with CWC22." evidence="26">
    <original>C</original>
    <variation>Q</variation>
    <location>
        <position position="99"/>
    </location>
</feature>
<feature type="mutagenesis site" description="Loss of CWC22-binding and loss of incorporation into EJCs; when associated with K-273." evidence="22">
    <original>D</original>
    <variation>K</variation>
    <location>
        <position position="270"/>
    </location>
</feature>
<feature type="mutagenesis site" description="Loss of CWC22-binding and loss of incorporation into EJCs; when associated with K-270." evidence="22">
    <original>D</original>
    <variation>K</variation>
    <location>
        <position position="273"/>
    </location>
</feature>
<feature type="mutagenesis site" description="Loss of CWC22-binding and loss of incorporation into EJCs." evidence="22">
    <original>TI</original>
    <variation>GD</variation>
    <location>
        <begin position="276"/>
        <end position="277"/>
    </location>
</feature>
<feature type="mutagenesis site" description="Decreased interaction with CWC22." evidence="26">
    <original>AN</original>
    <variation>RD</variation>
    <location>
        <begin position="300"/>
        <end position="301"/>
    </location>
</feature>
<feature type="mutagenesis site" description="Loss of CWC22-binding and loss of incorporation into EJCs." evidence="22">
    <original>NFT</original>
    <variation>LAG</variation>
    <location>
        <begin position="301"/>
        <end position="303"/>
    </location>
</feature>
<feature type="mutagenesis site" description="Reduced incorporation into EJCs." evidence="24">
    <original>T</original>
    <variation>V</variation>
    <location>
        <position position="334"/>
    </location>
</feature>
<feature type="mutagenesis site" description="Loss of incorporation into EJCs; when associated with R-402." evidence="23">
    <original>D</original>
    <variation>K</variation>
    <location>
        <position position="401"/>
    </location>
</feature>
<feature type="mutagenesis site" description="Loss of incorporation into EJCs; when associated with K-401." evidence="23">
    <original>E</original>
    <variation>R</variation>
    <location>
        <position position="402"/>
    </location>
</feature>
<feature type="sequence conflict" description="In Ref. 1; CAA56074." evidence="35" ref="1">
    <original>P</original>
    <variation>S</variation>
    <location>
        <position position="210"/>
    </location>
</feature>
<feature type="sequence conflict" description="In Ref. 1; CAA56074." evidence="35" ref="1">
    <original>R</original>
    <variation>Q</variation>
    <location>
        <position position="370"/>
    </location>
</feature>
<feature type="helix" evidence="65">
    <location>
        <begin position="23"/>
        <end position="25"/>
    </location>
</feature>
<feature type="strand" evidence="65">
    <location>
        <begin position="28"/>
        <end position="32"/>
    </location>
</feature>
<feature type="helix" evidence="65">
    <location>
        <begin position="40"/>
        <end position="42"/>
    </location>
</feature>
<feature type="helix" evidence="65">
    <location>
        <begin position="47"/>
        <end position="56"/>
    </location>
</feature>
<feature type="helix" evidence="65">
    <location>
        <begin position="65"/>
        <end position="73"/>
    </location>
</feature>
<feature type="strand" evidence="65">
    <location>
        <begin position="78"/>
        <end position="81"/>
    </location>
</feature>
<feature type="strand" evidence="61">
    <location>
        <begin position="84"/>
        <end position="86"/>
    </location>
</feature>
<feature type="helix" evidence="65">
    <location>
        <begin position="88"/>
        <end position="98"/>
    </location>
</feature>
<feature type="strand" evidence="64">
    <location>
        <begin position="102"/>
        <end position="104"/>
    </location>
</feature>
<feature type="strand" evidence="65">
    <location>
        <begin position="109"/>
        <end position="112"/>
    </location>
</feature>
<feature type="helix" evidence="65">
    <location>
        <begin position="116"/>
        <end position="129"/>
    </location>
</feature>
<feature type="turn" evidence="65">
    <location>
        <begin position="130"/>
        <end position="134"/>
    </location>
</feature>
<feature type="strand" evidence="65">
    <location>
        <begin position="137"/>
        <end position="139"/>
    </location>
</feature>
<feature type="helix" evidence="65">
    <location>
        <begin position="143"/>
        <end position="145"/>
    </location>
</feature>
<feature type="helix" evidence="65">
    <location>
        <begin position="146"/>
        <end position="155"/>
    </location>
</feature>
<feature type="strand" evidence="65">
    <location>
        <begin position="158"/>
        <end position="162"/>
    </location>
</feature>
<feature type="helix" evidence="65">
    <location>
        <begin position="164"/>
        <end position="172"/>
    </location>
</feature>
<feature type="strand" evidence="65">
    <location>
        <begin position="183"/>
        <end position="186"/>
    </location>
</feature>
<feature type="helix" evidence="65">
    <location>
        <begin position="189"/>
        <end position="195"/>
    </location>
</feature>
<feature type="helix" evidence="65">
    <location>
        <begin position="198"/>
        <end position="206"/>
    </location>
</feature>
<feature type="strand" evidence="65">
    <location>
        <begin position="213"/>
        <end position="219"/>
    </location>
</feature>
<feature type="helix" evidence="65">
    <location>
        <begin position="223"/>
        <end position="232"/>
    </location>
</feature>
<feature type="strand" evidence="65">
    <location>
        <begin position="237"/>
        <end position="241"/>
    </location>
</feature>
<feature type="helix" evidence="63">
    <location>
        <begin position="243"/>
        <end position="245"/>
    </location>
</feature>
<feature type="strand" evidence="65">
    <location>
        <begin position="251"/>
        <end position="260"/>
    </location>
</feature>
<feature type="helix" evidence="65">
    <location>
        <begin position="261"/>
        <end position="263"/>
    </location>
</feature>
<feature type="helix" evidence="65">
    <location>
        <begin position="264"/>
        <end position="274"/>
    </location>
</feature>
<feature type="strand" evidence="65">
    <location>
        <begin position="278"/>
        <end position="283"/>
    </location>
</feature>
<feature type="helix" evidence="65">
    <location>
        <begin position="287"/>
        <end position="299"/>
    </location>
</feature>
<feature type="strand" evidence="65">
    <location>
        <begin position="304"/>
        <end position="307"/>
    </location>
</feature>
<feature type="strand" evidence="64">
    <location>
        <begin position="309"/>
        <end position="311"/>
    </location>
</feature>
<feature type="helix" evidence="65">
    <location>
        <begin position="313"/>
        <end position="324"/>
    </location>
</feature>
<feature type="strand" evidence="65">
    <location>
        <begin position="329"/>
        <end position="333"/>
    </location>
</feature>
<feature type="helix" evidence="63">
    <location>
        <begin position="335"/>
        <end position="337"/>
    </location>
</feature>
<feature type="strand" evidence="63">
    <location>
        <begin position="338"/>
        <end position="340"/>
    </location>
</feature>
<feature type="strand" evidence="65">
    <location>
        <begin position="346"/>
        <end position="353"/>
    </location>
</feature>
<feature type="strand" evidence="65">
    <location>
        <begin position="356"/>
        <end position="358"/>
    </location>
</feature>
<feature type="helix" evidence="65">
    <location>
        <begin position="360"/>
        <end position="365"/>
    </location>
</feature>
<feature type="strand" evidence="65">
    <location>
        <begin position="367"/>
        <end position="369"/>
    </location>
</feature>
<feature type="helix" evidence="63">
    <location>
        <begin position="370"/>
        <end position="372"/>
    </location>
</feature>
<feature type="strand" evidence="65">
    <location>
        <begin position="375"/>
        <end position="382"/>
    </location>
</feature>
<feature type="helix" evidence="65">
    <location>
        <begin position="383"/>
        <end position="385"/>
    </location>
</feature>
<feature type="helix" evidence="65">
    <location>
        <begin position="386"/>
        <end position="396"/>
    </location>
</feature>
<feature type="strand" evidence="62">
    <location>
        <begin position="400"/>
        <end position="402"/>
    </location>
</feature>
<feature type="helix" evidence="65">
    <location>
        <begin position="405"/>
        <end position="410"/>
    </location>
</feature>
<name>IF4A3_HUMAN</name>
<sequence length="411" mass="46871">MATTATMATSGSARKRLLKEEDMTKVEFETSEEVDVTPTFDTMGLREDLLRGIYAYGFEKPSAIQQRAIKQIIKGRDVIAQSQSGTGKTATFSISVLQCLDIQVRETQALILAPTRELAVQIQKGLLALGDYMNVQCHACIGGTNVGEDIRKLDYGQHVVAGTPGRVFDMIRRRSLRTRAIKMLVLDEADEMLNKGFKEQIYDVYRYLPPATQVVLISATLPHEILEMTNKFMTDPIRILVKRDELTLEGIKQFFVAVEREEWKFDTLCDLYDTLTITQAVIFCNTKRKVDWLTEKMREANFTVSSMHGDMPQKERESIMKEFRSGASRVLISTDVWARGLDVPQVSLIINYDLPNNRELYIHRIGRSGRYGRKGVAINFVKNDDIRILRDIEQYYSTQIDEMPMNVADLI</sequence>
<evidence type="ECO:0000250" key="1">
    <source>
        <dbReference type="UniProtKB" id="P60842"/>
    </source>
</evidence>
<evidence type="ECO:0000250" key="2">
    <source>
        <dbReference type="UniProtKB" id="P60843"/>
    </source>
</evidence>
<evidence type="ECO:0000250" key="3">
    <source>
        <dbReference type="UniProtKB" id="Q3B8Q2"/>
    </source>
</evidence>
<evidence type="ECO:0000255" key="4">
    <source>
        <dbReference type="PROSITE-ProRule" id="PRU00541"/>
    </source>
</evidence>
<evidence type="ECO:0000255" key="5">
    <source>
        <dbReference type="PROSITE-ProRule" id="PRU00542"/>
    </source>
</evidence>
<evidence type="ECO:0000269" key="6">
    <source>
    </source>
</evidence>
<evidence type="ECO:0000269" key="7">
    <source>
    </source>
</evidence>
<evidence type="ECO:0000269" key="8">
    <source>
    </source>
</evidence>
<evidence type="ECO:0000269" key="9">
    <source>
    </source>
</evidence>
<evidence type="ECO:0000269" key="10">
    <source>
    </source>
</evidence>
<evidence type="ECO:0000269" key="11">
    <source>
    </source>
</evidence>
<evidence type="ECO:0000269" key="12">
    <source>
    </source>
</evidence>
<evidence type="ECO:0000269" key="13">
    <source>
    </source>
</evidence>
<evidence type="ECO:0000269" key="14">
    <source>
    </source>
</evidence>
<evidence type="ECO:0000269" key="15">
    <source>
    </source>
</evidence>
<evidence type="ECO:0000269" key="16">
    <source>
    </source>
</evidence>
<evidence type="ECO:0000269" key="17">
    <source>
    </source>
</evidence>
<evidence type="ECO:0000269" key="18">
    <source>
    </source>
</evidence>
<evidence type="ECO:0000269" key="19">
    <source>
    </source>
</evidence>
<evidence type="ECO:0000269" key="20">
    <source>
    </source>
</evidence>
<evidence type="ECO:0000269" key="21">
    <source>
    </source>
</evidence>
<evidence type="ECO:0000269" key="22">
    <source>
    </source>
</evidence>
<evidence type="ECO:0000269" key="23">
    <source>
    </source>
</evidence>
<evidence type="ECO:0000269" key="24">
    <source>
    </source>
</evidence>
<evidence type="ECO:0000269" key="25">
    <source>
    </source>
</evidence>
<evidence type="ECO:0000269" key="26">
    <source>
    </source>
</evidence>
<evidence type="ECO:0000269" key="27">
    <source>
    </source>
</evidence>
<evidence type="ECO:0000269" key="28">
    <source>
    </source>
</evidence>
<evidence type="ECO:0000269" key="29">
    <source>
    </source>
</evidence>
<evidence type="ECO:0000269" key="30">
    <source>
    </source>
</evidence>
<evidence type="ECO:0000269" key="31">
    <source>
    </source>
</evidence>
<evidence type="ECO:0000269" key="32">
    <source>
    </source>
</evidence>
<evidence type="ECO:0000269" key="33">
    <source>
    </source>
</evidence>
<evidence type="ECO:0000269" key="34">
    <source ref="8"/>
</evidence>
<evidence type="ECO:0000305" key="35"/>
<evidence type="ECO:0007744" key="36">
    <source>
        <dbReference type="PDB" id="2HXY"/>
    </source>
</evidence>
<evidence type="ECO:0007744" key="37">
    <source>
        <dbReference type="PDB" id="2HYI"/>
    </source>
</evidence>
<evidence type="ECO:0007744" key="38">
    <source>
        <dbReference type="PDB" id="2J0Q"/>
    </source>
</evidence>
<evidence type="ECO:0007744" key="39">
    <source>
        <dbReference type="PDB" id="2J0S"/>
    </source>
</evidence>
<evidence type="ECO:0007744" key="40">
    <source>
        <dbReference type="PDB" id="2J0U"/>
    </source>
</evidence>
<evidence type="ECO:0007744" key="41">
    <source>
        <dbReference type="PDB" id="2XB2"/>
    </source>
</evidence>
<evidence type="ECO:0007744" key="42">
    <source>
        <dbReference type="PDB" id="3EX7"/>
    </source>
</evidence>
<evidence type="ECO:0007744" key="43">
    <source>
        <dbReference type="PDB" id="4C9B"/>
    </source>
</evidence>
<evidence type="ECO:0007744" key="44">
    <source>
        <dbReference type="PDB" id="5MQF"/>
    </source>
</evidence>
<evidence type="ECO:0007744" key="45">
    <source>
        <dbReference type="PDB" id="5XJC"/>
    </source>
</evidence>
<evidence type="ECO:0007744" key="46">
    <source>
        <dbReference type="PDB" id="5YZG"/>
    </source>
</evidence>
<evidence type="ECO:0007744" key="47">
    <source>
        <dbReference type="PDB" id="7ZNJ"/>
    </source>
</evidence>
<evidence type="ECO:0007744" key="48">
    <source>
    </source>
</evidence>
<evidence type="ECO:0007744" key="49">
    <source>
    </source>
</evidence>
<evidence type="ECO:0007744" key="50">
    <source>
    </source>
</evidence>
<evidence type="ECO:0007744" key="51">
    <source>
    </source>
</evidence>
<evidence type="ECO:0007744" key="52">
    <source>
    </source>
</evidence>
<evidence type="ECO:0007744" key="53">
    <source>
    </source>
</evidence>
<evidence type="ECO:0007744" key="54">
    <source>
    </source>
</evidence>
<evidence type="ECO:0007744" key="55">
    <source>
    </source>
</evidence>
<evidence type="ECO:0007744" key="56">
    <source>
    </source>
</evidence>
<evidence type="ECO:0007744" key="57">
    <source>
    </source>
</evidence>
<evidence type="ECO:0007744" key="58">
    <source>
    </source>
</evidence>
<evidence type="ECO:0007744" key="59">
    <source>
    </source>
</evidence>
<evidence type="ECO:0007744" key="60">
    <source>
    </source>
</evidence>
<evidence type="ECO:0007829" key="61">
    <source>
        <dbReference type="PDB" id="2HXY"/>
    </source>
</evidence>
<evidence type="ECO:0007829" key="62">
    <source>
        <dbReference type="PDB" id="2HYI"/>
    </source>
</evidence>
<evidence type="ECO:0007829" key="63">
    <source>
        <dbReference type="PDB" id="2J0S"/>
    </source>
</evidence>
<evidence type="ECO:0007829" key="64">
    <source>
        <dbReference type="PDB" id="2J0U"/>
    </source>
</evidence>
<evidence type="ECO:0007829" key="65">
    <source>
        <dbReference type="PDB" id="4C9B"/>
    </source>
</evidence>
<proteinExistence type="evidence at protein level"/>
<comment type="function">
    <text evidence="7 9 10 11 12 14 15 16 18 19 20 21 23 27 30 31 32">ATP-dependent RNA helicase (PubMed:16170325). Involved in pre-mRNA splicing as component of the spliceosome (PubMed:11991638, PubMed:22961380, PubMed:28076346, PubMed:28502770, PubMed:29301961). Core component of the splicing-dependent multiprotein exon junction complex (EJC) deposited at splice junctions on mRNAs (PubMed:16170325, PubMed:16209946, PubMed:16314458, PubMed:16923391, PubMed:16931718, PubMed:19033377, PubMed:20479275). The EJC is a dynamic structure consisting of core proteins and several peripheral nuclear and cytoplasmic associated factors that join the complex only transiently either during EJC assembly or during subsequent mRNA metabolism. The EJC marks the position of the exon-exon junction in the mature mRNA for the gene expression machinery and the core components remain bound to spliced mRNAs throughout all stages of mRNA metabolism thereby influencing downstream processes including nuclear mRNA export, subcellular mRNA localization, translation efficiency and nonsense-mediated mRNA decay (NMD). Its RNA-dependent ATPase and RNA-helicase activities are induced by CASC3, but abolished in presence of the MAGOH-RBM8A heterodimer, thereby trapping the ATP-bound EJC core onto spliced mRNA in a stable conformation. The inhibition of ATPase activity by the MAGOH-RBM8A heterodimer increases the RNA-binding affinity of the EJC. Involved in translational enhancement of spliced mRNAs after formation of the 80S ribosome complex. Binds spliced mRNA in sequence-independent manner, 20-24 nucleotides upstream of mRNA exon-exon junctions. Shows higher affinity for single-stranded RNA in an ATP-bound core EJC complex than after the ATP is hydrolyzed. Involved in the splicing modulation of BCL2L1/Bcl-X (and probably other apoptotic genes); specifically inhibits formation of proapoptotic isoforms such as Bcl-X(S); the function is different from the established EJC assembly (PubMed:22203037). Involved in craniofacial development (PubMed:24360810).</text>
</comment>
<comment type="catalytic activity">
    <reaction evidence="10 16 23">
        <text>ATP + H2O = ADP + phosphate + H(+)</text>
        <dbReference type="Rhea" id="RHEA:13065"/>
        <dbReference type="ChEBI" id="CHEBI:15377"/>
        <dbReference type="ChEBI" id="CHEBI:15378"/>
        <dbReference type="ChEBI" id="CHEBI:30616"/>
        <dbReference type="ChEBI" id="CHEBI:43474"/>
        <dbReference type="ChEBI" id="CHEBI:456216"/>
        <dbReference type="EC" id="3.6.4.13"/>
    </reaction>
</comment>
<comment type="activity regulation">
    <text evidence="23">The ATPase activity is increased some 4-fold in the presence of RNA.</text>
</comment>
<comment type="subunit">
    <text evidence="7 8 9 10 12 13 14 15 17 18 20 22 23 24 25 26 28 29 30 31 32 33">Identified in the spliceosome C complex (PubMed:11991638, PubMed:22961380, PubMed:28076346, PubMed:28502770, PubMed:29301961). Core component of the mRNA splicing-dependent exon junction complex (EJC); the core complex contains CASC3, EIF4A3, MAGOH or MAGOHB, and RBM8A (PubMed:14730019, PubMed:15034551, PubMed:16170325, PubMed:16314458, PubMed:16923391, PubMed:16931718, PubMed:19033377, PubMed:20479275, PubMed:23917022). Interacts with CASC3, MAGOH, NXF1, RBM8A and ALYREF/THOC4 (PubMed:14730019, PubMed:16170325, PubMed:16495234, PubMed:22961380). Component of the ALYREF/THOC4-EJC-RNA complex; in the complex interacts with MAGOH, RBM8A and THOC4 (via the WXHD motif); these interactions are likely specific to RNA-bound EJC (PubMed:14730019, PubMed:16314458, PubMed:37020021). May interact with NOM1. Interacts with POLDIP3 (PubMed:18423201). Interacts with CWC22 and PRPF19 in an RNA-independent manner (PubMed:22959432, PubMed:22961380, PubMed:23236153, PubMed:24218557). Direct interaction with CWC22 is mediated by the helicase C-terminal domain (PubMed:22959432, PubMed:24218557). Full interaction with CWC22 occurs only when EIF4A3 is not part of the EJC and prevents EIF4A3 binding to RNA. Identified in a complex composed of the EJC core, UPF3B and UPF2. The EJC core can also interact with UPF3A (in vitro) (PubMed:20479275). Interacts with NCBP3 (PubMed:26382858). Interacts with NRDE2 (PubMed:30538148). Interacts with DHX34; the interaction is RNA-independent (PubMed:25220460).</text>
</comment>
<comment type="interaction">
    <interactant intactId="EBI-299104">
        <id>P38919</id>
    </interactant>
    <interactant intactId="EBI-11530605">
        <id>Q9H257-2</id>
        <label>CARD9</label>
    </interactant>
    <organismsDiffer>false</organismsDiffer>
    <experiments>3</experiments>
</comment>
<comment type="interaction">
    <interactant intactId="EBI-299104">
        <id>P38919</id>
    </interactant>
    <interactant intactId="EBI-299118">
        <id>O15234</id>
        <label>CASC3</label>
    </interactant>
    <organismsDiffer>false</organismsDiffer>
    <experiments>37</experiments>
</comment>
<comment type="interaction">
    <interactant intactId="EBI-299104">
        <id>P38919</id>
    </interactant>
    <interactant intactId="EBI-747830">
        <id>Q6PII3</id>
        <label>CCDC174</label>
    </interactant>
    <organismsDiffer>false</organismsDiffer>
    <experiments>5</experiments>
</comment>
<comment type="interaction">
    <interactant intactId="EBI-299104">
        <id>P38919</id>
    </interactant>
    <interactant intactId="EBI-5278764">
        <id>Q96GN5</id>
        <label>CDCA7L</label>
    </interactant>
    <organismsDiffer>false</organismsDiffer>
    <experiments>3</experiments>
</comment>
<comment type="interaction">
    <interactant intactId="EBI-299104">
        <id>P38919</id>
    </interactant>
    <interactant intactId="EBI-10253274">
        <id>Q6P9H4</id>
        <label>CNKSR3</label>
    </interactant>
    <organismsDiffer>false</organismsDiffer>
    <experiments>3</experiments>
</comment>
<comment type="interaction">
    <interactant intactId="EBI-299104">
        <id>P38919</id>
    </interactant>
    <interactant intactId="EBI-373289">
        <id>Q9HCG8</id>
        <label>CWC22</label>
    </interactant>
    <organismsDiffer>false</organismsDiffer>
    <experiments>6</experiments>
</comment>
<comment type="interaction">
    <interactant intactId="EBI-299104">
        <id>P38919</id>
    </interactant>
    <interactant intactId="EBI-742054">
        <id>Q96D03</id>
        <label>DDIT4L</label>
    </interactant>
    <organismsDiffer>false</organismsDiffer>
    <experiments>3</experiments>
</comment>
<comment type="interaction">
    <interactant intactId="EBI-299104">
        <id>P38919</id>
    </interactant>
    <interactant intactId="EBI-372376">
        <id>Q9NY93</id>
        <label>DDX56</label>
    </interactant>
    <organismsDiffer>false</organismsDiffer>
    <experiments>3</experiments>
</comment>
<comment type="interaction">
    <interactant intactId="EBI-299104">
        <id>P38919</id>
    </interactant>
    <interactant intactId="EBI-11988027">
        <id>Q9NRI5-2</id>
        <label>DISC1</label>
    </interactant>
    <organismsDiffer>false</organismsDiffer>
    <experiments>3</experiments>
</comment>
<comment type="interaction">
    <interactant intactId="EBI-299104">
        <id>P38919</id>
    </interactant>
    <interactant intactId="EBI-750565">
        <id>P55039</id>
        <label>DRG2</label>
    </interactant>
    <organismsDiffer>false</organismsDiffer>
    <experiments>3</experiments>
</comment>
<comment type="interaction">
    <interactant intactId="EBI-299104">
        <id>P38919</id>
    </interactant>
    <interactant intactId="EBI-744366">
        <id>Q96KQ7</id>
        <label>EHMT2</label>
    </interactant>
    <organismsDiffer>false</organismsDiffer>
    <experiments>3</experiments>
</comment>
<comment type="interaction">
    <interactant intactId="EBI-299104">
        <id>P38919</id>
    </interactant>
    <interactant intactId="EBI-739832">
        <id>Q8TBB1</id>
        <label>LNX1</label>
    </interactant>
    <organismsDiffer>false</organismsDiffer>
    <experiments>3</experiments>
</comment>
<comment type="interaction">
    <interactant intactId="EBI-299104">
        <id>P38919</id>
    </interactant>
    <interactant intactId="EBI-299134">
        <id>P61326</id>
        <label>MAGOH</label>
    </interactant>
    <organismsDiffer>false</organismsDiffer>
    <experiments>30</experiments>
</comment>
<comment type="interaction">
    <interactant intactId="EBI-299104">
        <id>P38919</id>
    </interactant>
    <interactant intactId="EBI-2864512">
        <id>P50221</id>
        <label>MEOX1</label>
    </interactant>
    <organismsDiffer>false</organismsDiffer>
    <experiments>3</experiments>
</comment>
<comment type="interaction">
    <interactant intactId="EBI-299104">
        <id>P38919</id>
    </interactant>
    <interactant intactId="EBI-16439278">
        <id>Q6FHY5</id>
        <label>MEOX2</label>
    </interactant>
    <organismsDiffer>false</organismsDiffer>
    <experiments>3</experiments>
</comment>
<comment type="interaction">
    <interactant intactId="EBI-299104">
        <id>P38919</id>
    </interactant>
    <interactant intactId="EBI-740897">
        <id>Q9GZT8</id>
        <label>NIF3L1</label>
    </interactant>
    <organismsDiffer>false</organismsDiffer>
    <experiments>3</experiments>
</comment>
<comment type="interaction">
    <interactant intactId="EBI-299104">
        <id>P38919</id>
    </interactant>
    <interactant intactId="EBI-2685618">
        <id>Q5C9Z4</id>
        <label>NOM1</label>
    </interactant>
    <organismsDiffer>false</organismsDiffer>
    <experiments>4</experiments>
</comment>
<comment type="interaction">
    <interactant intactId="EBI-299104">
        <id>P38919</id>
    </interactant>
    <interactant intactId="EBI-10240813">
        <id>Q3KNR5</id>
        <label>PAX4</label>
    </interactant>
    <organismsDiffer>false</organismsDiffer>
    <experiments>3</experiments>
</comment>
<comment type="interaction">
    <interactant intactId="EBI-299104">
        <id>P38919</id>
    </interactant>
    <interactant intactId="EBI-935824">
        <id>Q53EL6</id>
        <label>PDCD4</label>
    </interactant>
    <organismsDiffer>false</organismsDiffer>
    <experiments>6</experiments>
</comment>
<comment type="interaction">
    <interactant intactId="EBI-299104">
        <id>P38919</id>
    </interactant>
    <interactant intactId="EBI-79165">
        <id>Q9NRD5</id>
        <label>PICK1</label>
    </interactant>
    <organismsDiffer>false</organismsDiffer>
    <experiments>3</experiments>
</comment>
<comment type="interaction">
    <interactant intactId="EBI-299104">
        <id>P38919</id>
    </interactant>
    <interactant intactId="EBI-347928">
        <id>P62487</id>
        <label>POLR2G</label>
    </interactant>
    <organismsDiffer>false</organismsDiffer>
    <experiments>3</experiments>
</comment>
<comment type="interaction">
    <interactant intactId="EBI-299104">
        <id>P38919</id>
    </interactant>
    <interactant intactId="EBI-351098">
        <id>O14744</id>
        <label>PRMT5</label>
    </interactant>
    <organismsDiffer>false</organismsDiffer>
    <experiments>3</experiments>
</comment>
<comment type="interaction">
    <interactant intactId="EBI-299104">
        <id>P38919</id>
    </interactant>
    <interactant intactId="EBI-359352">
        <id>P25786</id>
        <label>PSMA1</label>
    </interactant>
    <organismsDiffer>false</organismsDiffer>
    <experiments>3</experiments>
</comment>
<comment type="interaction">
    <interactant intactId="EBI-299104">
        <id>P38919</id>
    </interactant>
    <interactant intactId="EBI-447231">
        <id>Q9Y5S9</id>
        <label>RBM8A</label>
    </interactant>
    <organismsDiffer>false</organismsDiffer>
    <experiments>22</experiments>
</comment>
<comment type="interaction">
    <interactant intactId="EBI-299104">
        <id>P38919</id>
    </interactant>
    <interactant intactId="EBI-10829018">
        <id>Q04864-2</id>
        <label>REL</label>
    </interactant>
    <organismsDiffer>false</organismsDiffer>
    <experiments>3</experiments>
</comment>
<comment type="interaction">
    <interactant intactId="EBI-299104">
        <id>P38919</id>
    </interactant>
    <interactant intactId="EBI-352039">
        <id>Q9Y2W1</id>
        <label>THRAP3</label>
    </interactant>
    <organismsDiffer>false</organismsDiffer>
    <experiments>2</experiments>
</comment>
<comment type="interaction">
    <interactant intactId="EBI-299104">
        <id>P38919</id>
    </interactant>
    <interactant intactId="EBI-719493">
        <id>P14373</id>
        <label>TRIM27</label>
    </interactant>
    <organismsDiffer>false</organismsDiffer>
    <experiments>3</experiments>
</comment>
<comment type="interaction">
    <interactant intactId="EBI-299104">
        <id>P38919</id>
    </interactant>
    <interactant intactId="EBI-372780">
        <id>Q9BZI7</id>
        <label>UPF3B</label>
    </interactant>
    <organismsDiffer>false</organismsDiffer>
    <experiments>9</experiments>
</comment>
<comment type="interaction">
    <interactant intactId="EBI-299104">
        <id>P38919</id>
    </interactant>
    <interactant intactId="EBI-12894399">
        <id>Q9H8Y1</id>
        <label>VRTN</label>
    </interactant>
    <organismsDiffer>false</organismsDiffer>
    <experiments>3</experiments>
</comment>
<comment type="interaction">
    <interactant intactId="EBI-299104">
        <id>P38919</id>
    </interactant>
    <interactant intactId="EBI-17493569">
        <id>P98169</id>
        <label>ZXDB</label>
    </interactant>
    <organismsDiffer>false</organismsDiffer>
    <experiments>3</experiments>
</comment>
<comment type="subcellular location">
    <subcellularLocation>
        <location evidence="6 7 23 30 31 32">Nucleus</location>
    </subcellularLocation>
    <subcellularLocation>
        <location evidence="6">Nucleus speckle</location>
    </subcellularLocation>
    <subcellularLocation>
        <location evidence="3">Cytoplasm</location>
    </subcellularLocation>
    <text evidence="3">Nucleocytoplasmic shuttling protein. Travels to the cytoplasm as part of the exon junction complex (EJC) bound to mRNA. Detected in dendritic layer as well as the nuclear and cytoplasmic (somatic) compartments of neurons. Colocalizes with STAU1 and FMR1 in dendrites (By similarity).</text>
</comment>
<comment type="tissue specificity">
    <text evidence="6">Ubiquitously expressed.</text>
</comment>
<comment type="disease" evidence="27">
    <disease id="DI-04063">
        <name>Richieri-Costa-Pereira syndrome</name>
        <acronym>RCPS</acronym>
        <description>A syndrome characterized by a unique pattern of anomalies consisting of microstomia, micrognathia, abnormal fusion of mandible, cleft palate/Robin sequence, absence of central lower incisors, minor ears anomalies, hypoplastic first ray, abnormal tibiae, hypoplastic halluces, and clubfeet. Learning disability is also a common finding.</description>
        <dbReference type="MIM" id="268305"/>
    </disease>
    <text evidence="27">The disease is caused by variants affecting the gene represented in this entry. EIF4A3 mutations resulting in Richieri-Costa-Pereira syndrome include a repeat expansion of 18 or 20 nucleotides in the 5' untranslated region. Affected individuals have 14 to 16 repeats, while healthy individuals have 3 to 12 repeats (PubMed:24360810).</text>
</comment>
<comment type="similarity">
    <text evidence="35">Belongs to the DEAD box helicase family. eIF4A subfamily.</text>
</comment>
<comment type="sequence caution" evidence="35">
    <conflict type="erroneous initiation">
        <sequence resource="EMBL-CDS" id="BAA04879"/>
    </conflict>
    <text>Extended N-terminus.</text>
</comment>
<dbReference type="EC" id="3.6.4.13" evidence="10 16 23"/>
<dbReference type="EMBL" id="X79538">
    <property type="protein sequence ID" value="CAA56074.1"/>
    <property type="molecule type" value="mRNA"/>
</dbReference>
<dbReference type="EMBL" id="D21853">
    <property type="protein sequence ID" value="BAA04879.2"/>
    <property type="status" value="ALT_INIT"/>
    <property type="molecule type" value="mRNA"/>
</dbReference>
<dbReference type="EMBL" id="AK290608">
    <property type="protein sequence ID" value="BAF83297.1"/>
    <property type="molecule type" value="mRNA"/>
</dbReference>
<dbReference type="EMBL" id="CR456750">
    <property type="protein sequence ID" value="CAG33031.1"/>
    <property type="molecule type" value="mRNA"/>
</dbReference>
<dbReference type="EMBL" id="AC087741">
    <property type="status" value="NOT_ANNOTATED_CDS"/>
    <property type="molecule type" value="Genomic_DNA"/>
</dbReference>
<dbReference type="EMBL" id="CH471099">
    <property type="protein sequence ID" value="EAW89584.1"/>
    <property type="molecule type" value="Genomic_DNA"/>
</dbReference>
<dbReference type="EMBL" id="BC003662">
    <property type="protein sequence ID" value="AAH03662.1"/>
    <property type="molecule type" value="mRNA"/>
</dbReference>
<dbReference type="EMBL" id="BC004386">
    <property type="protein sequence ID" value="AAH04386.1"/>
    <property type="molecule type" value="mRNA"/>
</dbReference>
<dbReference type="EMBL" id="BC011151">
    <property type="protein sequence ID" value="AAH11151.1"/>
    <property type="molecule type" value="mRNA"/>
</dbReference>
<dbReference type="CCDS" id="CCDS11767.1"/>
<dbReference type="PIR" id="S45142">
    <property type="entry name" value="S45142"/>
</dbReference>
<dbReference type="RefSeq" id="NP_055555.1">
    <property type="nucleotide sequence ID" value="NM_014740.4"/>
</dbReference>
<dbReference type="PDB" id="2HXY">
    <property type="method" value="X-ray"/>
    <property type="resolution" value="3.30 A"/>
    <property type="chains" value="A/B/C/D=23-411"/>
</dbReference>
<dbReference type="PDB" id="2HYI">
    <property type="method" value="X-ray"/>
    <property type="resolution" value="2.30 A"/>
    <property type="chains" value="C/I=1-411"/>
</dbReference>
<dbReference type="PDB" id="2J0Q">
    <property type="method" value="X-ray"/>
    <property type="resolution" value="3.20 A"/>
    <property type="chains" value="A/B=2-411"/>
</dbReference>
<dbReference type="PDB" id="2J0S">
    <property type="method" value="X-ray"/>
    <property type="resolution" value="2.21 A"/>
    <property type="chains" value="A=2-411"/>
</dbReference>
<dbReference type="PDB" id="2J0U">
    <property type="method" value="X-ray"/>
    <property type="resolution" value="3.00 A"/>
    <property type="chains" value="A/B=38-411"/>
</dbReference>
<dbReference type="PDB" id="2XB2">
    <property type="method" value="X-ray"/>
    <property type="resolution" value="3.40 A"/>
    <property type="chains" value="A/X=1-411"/>
</dbReference>
<dbReference type="PDB" id="3EX7">
    <property type="method" value="X-ray"/>
    <property type="resolution" value="2.30 A"/>
    <property type="chains" value="C/H=1-411"/>
</dbReference>
<dbReference type="PDB" id="4C9B">
    <property type="method" value="X-ray"/>
    <property type="resolution" value="2.00 A"/>
    <property type="chains" value="A=1-411"/>
</dbReference>
<dbReference type="PDB" id="5MQF">
    <property type="method" value="EM"/>
    <property type="resolution" value="5.90 A"/>
    <property type="chains" value="p=1-411"/>
</dbReference>
<dbReference type="PDB" id="5XJC">
    <property type="method" value="EM"/>
    <property type="resolution" value="3.60 A"/>
    <property type="chains" value="u=1-411"/>
</dbReference>
<dbReference type="PDB" id="5YZG">
    <property type="method" value="EM"/>
    <property type="resolution" value="4.10 A"/>
    <property type="chains" value="u=1-411"/>
</dbReference>
<dbReference type="PDB" id="6ICZ">
    <property type="method" value="EM"/>
    <property type="resolution" value="3.00 A"/>
    <property type="chains" value="u=1-411"/>
</dbReference>
<dbReference type="PDB" id="6QDV">
    <property type="method" value="EM"/>
    <property type="resolution" value="3.30 A"/>
    <property type="chains" value="7=22-404"/>
</dbReference>
<dbReference type="PDB" id="6YVH">
    <property type="method" value="X-ray"/>
    <property type="resolution" value="3.19 A"/>
    <property type="chains" value="H/J/K/L=246-411"/>
</dbReference>
<dbReference type="PDB" id="7A5P">
    <property type="method" value="EM"/>
    <property type="resolution" value="5.00 A"/>
    <property type="chains" value="y=1-411"/>
</dbReference>
<dbReference type="PDB" id="7W59">
    <property type="method" value="EM"/>
    <property type="resolution" value="3.60 A"/>
    <property type="chains" value="u=1-411"/>
</dbReference>
<dbReference type="PDB" id="7W5A">
    <property type="method" value="EM"/>
    <property type="resolution" value="3.60 A"/>
    <property type="chains" value="u=1-411"/>
</dbReference>
<dbReference type="PDB" id="7W5B">
    <property type="method" value="EM"/>
    <property type="resolution" value="4.30 A"/>
    <property type="chains" value="u=1-411"/>
</dbReference>
<dbReference type="PDB" id="7ZNJ">
    <property type="method" value="EM"/>
    <property type="resolution" value="2.40 A"/>
    <property type="chains" value="A/F/K/a/f/k=23-404"/>
</dbReference>
<dbReference type="PDB" id="8C6J">
    <property type="method" value="EM"/>
    <property type="resolution" value="2.80 A"/>
    <property type="chains" value="7=1-411"/>
</dbReference>
<dbReference type="PDB" id="8I0W">
    <property type="method" value="EM"/>
    <property type="resolution" value="3.40 A"/>
    <property type="chains" value="u=1-411"/>
</dbReference>
<dbReference type="PDB" id="9FMD">
    <property type="method" value="EM"/>
    <property type="resolution" value="3.30 A"/>
    <property type="chains" value="7=1-411"/>
</dbReference>
<dbReference type="PDBsum" id="2HXY"/>
<dbReference type="PDBsum" id="2HYI"/>
<dbReference type="PDBsum" id="2J0Q"/>
<dbReference type="PDBsum" id="2J0S"/>
<dbReference type="PDBsum" id="2J0U"/>
<dbReference type="PDBsum" id="2XB2"/>
<dbReference type="PDBsum" id="3EX7"/>
<dbReference type="PDBsum" id="4C9B"/>
<dbReference type="PDBsum" id="5MQF"/>
<dbReference type="PDBsum" id="5XJC"/>
<dbReference type="PDBsum" id="5YZG"/>
<dbReference type="PDBsum" id="6ICZ"/>
<dbReference type="PDBsum" id="6QDV"/>
<dbReference type="PDBsum" id="6YVH"/>
<dbReference type="PDBsum" id="7A5P"/>
<dbReference type="PDBsum" id="7W59"/>
<dbReference type="PDBsum" id="7W5A"/>
<dbReference type="PDBsum" id="7W5B"/>
<dbReference type="PDBsum" id="7ZNJ"/>
<dbReference type="PDBsum" id="8C6J"/>
<dbReference type="PDBsum" id="8I0W"/>
<dbReference type="PDBsum" id="9FMD"/>
<dbReference type="EMDB" id="EMD-14803"/>
<dbReference type="EMDB" id="EMD-16452"/>
<dbReference type="EMDB" id="EMD-32317"/>
<dbReference type="EMDB" id="EMD-32319"/>
<dbReference type="EMDB" id="EMD-32321"/>
<dbReference type="EMDB" id="EMD-35113"/>
<dbReference type="EMDB" id="EMD-3545"/>
<dbReference type="EMDB" id="EMD-4525"/>
<dbReference type="EMDB" id="EMD-6721"/>
<dbReference type="EMDB" id="EMD-6864"/>
<dbReference type="EMDB" id="EMD-9645"/>
<dbReference type="SMR" id="P38919"/>
<dbReference type="BioGRID" id="115119">
    <property type="interactions" value="523"/>
</dbReference>
<dbReference type="ComplexPortal" id="CPX-1941">
    <property type="entry name" value="Exon junction core complex, MAGOH variant"/>
</dbReference>
<dbReference type="ComplexPortal" id="CPX-682">
    <property type="entry name" value="Exon junction core complex, MAGOHB variant"/>
</dbReference>
<dbReference type="ComplexPortal" id="CPX-9481">
    <property type="entry name" value="ALYREF-binding exon junction complex"/>
</dbReference>
<dbReference type="CORUM" id="P38919"/>
<dbReference type="DIP" id="DIP-33218N"/>
<dbReference type="FunCoup" id="P38919">
    <property type="interactions" value="3521"/>
</dbReference>
<dbReference type="IntAct" id="P38919">
    <property type="interactions" value="255"/>
</dbReference>
<dbReference type="MINT" id="P38919"/>
<dbReference type="STRING" id="9606.ENSP00000497641"/>
<dbReference type="BindingDB" id="P38919"/>
<dbReference type="ChEMBL" id="CHEMBL4105832"/>
<dbReference type="TCDB" id="3.A.18.1.1">
    <property type="family name" value="the nuclear mrna exporter (mrna-e) family"/>
</dbReference>
<dbReference type="GlyCosmos" id="P38919">
    <property type="glycosylation" value="2 sites, 1 glycan"/>
</dbReference>
<dbReference type="GlyGen" id="P38919">
    <property type="glycosylation" value="3 sites, 1 O-linked glycan (2 sites)"/>
</dbReference>
<dbReference type="iPTMnet" id="P38919"/>
<dbReference type="PhosphoSitePlus" id="P38919"/>
<dbReference type="SwissPalm" id="P38919"/>
<dbReference type="BioMuta" id="EIF4A3"/>
<dbReference type="DMDM" id="20532400"/>
<dbReference type="REPRODUCTION-2DPAGE" id="IPI00009328"/>
<dbReference type="jPOST" id="P38919"/>
<dbReference type="MassIVE" id="P38919"/>
<dbReference type="PaxDb" id="9606-ENSP00000269349"/>
<dbReference type="PeptideAtlas" id="P38919"/>
<dbReference type="ProteomicsDB" id="55305"/>
<dbReference type="Pumba" id="P38919"/>
<dbReference type="Antibodypedia" id="19760">
    <property type="antibodies" value="254 antibodies from 31 providers"/>
</dbReference>
<dbReference type="DNASU" id="9775"/>
<dbReference type="Ensembl" id="ENST00000647795.1">
    <property type="protein sequence ID" value="ENSP00000497661.1"/>
    <property type="gene ID" value="ENSG00000141543.12"/>
</dbReference>
<dbReference type="Ensembl" id="ENST00000649764.2">
    <property type="protein sequence ID" value="ENSP00000497641.1"/>
    <property type="gene ID" value="ENSG00000141543.12"/>
</dbReference>
<dbReference type="Ensembl" id="ENST00000707787.1">
    <property type="protein sequence ID" value="ENSP00000516984.1"/>
    <property type="gene ID" value="ENSG00000291508.1"/>
</dbReference>
<dbReference type="Ensembl" id="ENST00000707791.1">
    <property type="protein sequence ID" value="ENSP00000516985.1"/>
    <property type="gene ID" value="ENSG00000291508.1"/>
</dbReference>
<dbReference type="GeneID" id="9775"/>
<dbReference type="KEGG" id="hsa:9775"/>
<dbReference type="MANE-Select" id="ENST00000649764.2">
    <property type="protein sequence ID" value="ENSP00000497641.1"/>
    <property type="RefSeq nucleotide sequence ID" value="NM_014740.4"/>
    <property type="RefSeq protein sequence ID" value="NP_055555.1"/>
</dbReference>
<dbReference type="UCSC" id="uc002jxs.3">
    <property type="organism name" value="human"/>
</dbReference>
<dbReference type="AGR" id="HGNC:18683"/>
<dbReference type="CTD" id="9775"/>
<dbReference type="DisGeNET" id="9775"/>
<dbReference type="GeneCards" id="EIF4A3"/>
<dbReference type="HGNC" id="HGNC:18683">
    <property type="gene designation" value="EIF4A3"/>
</dbReference>
<dbReference type="HPA" id="ENSG00000141543">
    <property type="expression patterns" value="Low tissue specificity"/>
</dbReference>
<dbReference type="MalaCards" id="EIF4A3"/>
<dbReference type="MIM" id="268305">
    <property type="type" value="phenotype"/>
</dbReference>
<dbReference type="MIM" id="608546">
    <property type="type" value="gene"/>
</dbReference>
<dbReference type="neXtProt" id="NX_P38919"/>
<dbReference type="OpenTargets" id="ENSG00000141543"/>
<dbReference type="Orphanet" id="3102">
    <property type="disease" value="Richieri Costa-Pereira syndrome"/>
</dbReference>
<dbReference type="PharmGKB" id="PA162384945"/>
<dbReference type="VEuPathDB" id="HostDB:ENSG00000141543"/>
<dbReference type="eggNOG" id="KOG0328">
    <property type="taxonomic scope" value="Eukaryota"/>
</dbReference>
<dbReference type="GeneTree" id="ENSGT00940000155037"/>
<dbReference type="HOGENOM" id="CLU_003041_1_0_1"/>
<dbReference type="InParanoid" id="P38919"/>
<dbReference type="OMA" id="TRFHDFK"/>
<dbReference type="OrthoDB" id="10265785at2759"/>
<dbReference type="PAN-GO" id="P38919">
    <property type="GO annotations" value="4 GO annotations based on evolutionary models"/>
</dbReference>
<dbReference type="PhylomeDB" id="P38919"/>
<dbReference type="TreeFam" id="TF300466"/>
<dbReference type="BRENDA" id="3.6.4.13">
    <property type="organism ID" value="2681"/>
</dbReference>
<dbReference type="PathwayCommons" id="P38919"/>
<dbReference type="Reactome" id="R-HSA-1169408">
    <property type="pathway name" value="ISG15 antiviral mechanism"/>
</dbReference>
<dbReference type="Reactome" id="R-HSA-159236">
    <property type="pathway name" value="Transport of Mature mRNA derived from an Intron-Containing Transcript"/>
</dbReference>
<dbReference type="Reactome" id="R-HSA-429947">
    <property type="pathway name" value="Deadenylation of mRNA"/>
</dbReference>
<dbReference type="Reactome" id="R-HSA-72163">
    <property type="pathway name" value="mRNA Splicing - Major Pathway"/>
</dbReference>
<dbReference type="Reactome" id="R-HSA-72187">
    <property type="pathway name" value="mRNA 3'-end processing"/>
</dbReference>
<dbReference type="Reactome" id="R-HSA-73856">
    <property type="pathway name" value="RNA Polymerase II Transcription Termination"/>
</dbReference>
<dbReference type="Reactome" id="R-HSA-9010553">
    <property type="pathway name" value="Regulation of expression of SLITs and ROBOs"/>
</dbReference>
<dbReference type="Reactome" id="R-HSA-975957">
    <property type="pathway name" value="Nonsense Mediated Decay (NMD) enhanced by the Exon Junction Complex (EJC)"/>
</dbReference>
<dbReference type="Reactome" id="R-HSA-9820841">
    <property type="pathway name" value="M-decay: degradation of maternal mRNAs by maternally stored factors"/>
</dbReference>
<dbReference type="Reactome" id="R-HSA-9820865">
    <property type="pathway name" value="Z-decay: degradation of maternal mRNAs by zygotically expressed factors"/>
</dbReference>
<dbReference type="SignaLink" id="P38919"/>
<dbReference type="SIGNOR" id="P38919"/>
<dbReference type="BioGRID-ORCS" id="9775">
    <property type="hits" value="847 hits in 1134 CRISPR screens"/>
</dbReference>
<dbReference type="CD-CODE" id="232F8A39">
    <property type="entry name" value="P-body"/>
</dbReference>
<dbReference type="CD-CODE" id="804901D1">
    <property type="entry name" value="Nuclear speckle"/>
</dbReference>
<dbReference type="CD-CODE" id="91857CE7">
    <property type="entry name" value="Nucleolus"/>
</dbReference>
<dbReference type="CD-CODE" id="DEE660B4">
    <property type="entry name" value="Stress granule"/>
</dbReference>
<dbReference type="ChiTaRS" id="EIF4A3">
    <property type="organism name" value="human"/>
</dbReference>
<dbReference type="EvolutionaryTrace" id="P38919"/>
<dbReference type="GeneWiki" id="EIF4A3"/>
<dbReference type="GenomeRNAi" id="9775"/>
<dbReference type="Pharos" id="P38919">
    <property type="development level" value="Tchem"/>
</dbReference>
<dbReference type="PRO" id="PR:P38919"/>
<dbReference type="Proteomes" id="UP000005640">
    <property type="component" value="Chromosome 17"/>
</dbReference>
<dbReference type="RNAct" id="P38919">
    <property type="molecule type" value="protein"/>
</dbReference>
<dbReference type="Bgee" id="ENSG00000141543">
    <property type="expression patterns" value="Expressed in type B pancreatic cell and 210 other cell types or tissues"/>
</dbReference>
<dbReference type="ExpressionAtlas" id="P38919">
    <property type="expression patterns" value="baseline and differential"/>
</dbReference>
<dbReference type="GO" id="GO:0071013">
    <property type="term" value="C:catalytic step 2 spliceosome"/>
    <property type="evidence" value="ECO:0000314"/>
    <property type="project" value="UniProtKB"/>
</dbReference>
<dbReference type="GO" id="GO:0005737">
    <property type="term" value="C:cytoplasm"/>
    <property type="evidence" value="ECO:0000314"/>
    <property type="project" value="HGNC-UCL"/>
</dbReference>
<dbReference type="GO" id="GO:0005829">
    <property type="term" value="C:cytosol"/>
    <property type="evidence" value="ECO:0000304"/>
    <property type="project" value="Reactome"/>
</dbReference>
<dbReference type="GO" id="GO:0030425">
    <property type="term" value="C:dendrite"/>
    <property type="evidence" value="ECO:0007669"/>
    <property type="project" value="Ensembl"/>
</dbReference>
<dbReference type="GO" id="GO:0035145">
    <property type="term" value="C:exon-exon junction complex"/>
    <property type="evidence" value="ECO:0000314"/>
    <property type="project" value="UniProtKB"/>
</dbReference>
<dbReference type="GO" id="GO:0098978">
    <property type="term" value="C:glutamatergic synapse"/>
    <property type="evidence" value="ECO:0007669"/>
    <property type="project" value="Ensembl"/>
</dbReference>
<dbReference type="GO" id="GO:0016020">
    <property type="term" value="C:membrane"/>
    <property type="evidence" value="ECO:0007005"/>
    <property type="project" value="UniProtKB"/>
</dbReference>
<dbReference type="GO" id="GO:0043025">
    <property type="term" value="C:neuronal cell body"/>
    <property type="evidence" value="ECO:0007669"/>
    <property type="project" value="Ensembl"/>
</dbReference>
<dbReference type="GO" id="GO:0016607">
    <property type="term" value="C:nuclear speck"/>
    <property type="evidence" value="ECO:0007669"/>
    <property type="project" value="UniProtKB-SubCell"/>
</dbReference>
<dbReference type="GO" id="GO:0005730">
    <property type="term" value="C:nucleolus"/>
    <property type="evidence" value="ECO:0000318"/>
    <property type="project" value="GO_Central"/>
</dbReference>
<dbReference type="GO" id="GO:0005654">
    <property type="term" value="C:nucleoplasm"/>
    <property type="evidence" value="ECO:0000314"/>
    <property type="project" value="HPA"/>
</dbReference>
<dbReference type="GO" id="GO:0005634">
    <property type="term" value="C:nucleus"/>
    <property type="evidence" value="ECO:0000314"/>
    <property type="project" value="UniProtKB"/>
</dbReference>
<dbReference type="GO" id="GO:0098794">
    <property type="term" value="C:postsynapse"/>
    <property type="evidence" value="ECO:0007669"/>
    <property type="project" value="GOC"/>
</dbReference>
<dbReference type="GO" id="GO:0071006">
    <property type="term" value="C:U2-type catalytic step 1 spliceosome"/>
    <property type="evidence" value="ECO:0000314"/>
    <property type="project" value="UniProtKB"/>
</dbReference>
<dbReference type="GO" id="GO:0005524">
    <property type="term" value="F:ATP binding"/>
    <property type="evidence" value="ECO:0000314"/>
    <property type="project" value="HGNC-UCL"/>
</dbReference>
<dbReference type="GO" id="GO:0016887">
    <property type="term" value="F:ATP hydrolysis activity"/>
    <property type="evidence" value="ECO:0007669"/>
    <property type="project" value="RHEA"/>
</dbReference>
<dbReference type="GO" id="GO:0003729">
    <property type="term" value="F:mRNA binding"/>
    <property type="evidence" value="ECO:0000314"/>
    <property type="project" value="UniProtKB"/>
</dbReference>
<dbReference type="GO" id="GO:0008143">
    <property type="term" value="F:poly(A) binding"/>
    <property type="evidence" value="ECO:0000314"/>
    <property type="project" value="HGNC-UCL"/>
</dbReference>
<dbReference type="GO" id="GO:0043021">
    <property type="term" value="F:ribonucleoprotein complex binding"/>
    <property type="evidence" value="ECO:0007669"/>
    <property type="project" value="Ensembl"/>
</dbReference>
<dbReference type="GO" id="GO:0003723">
    <property type="term" value="F:RNA binding"/>
    <property type="evidence" value="ECO:0007005"/>
    <property type="project" value="UniProtKB"/>
</dbReference>
<dbReference type="GO" id="GO:0003724">
    <property type="term" value="F:RNA helicase activity"/>
    <property type="evidence" value="ECO:0000314"/>
    <property type="project" value="HGNC-UCL"/>
</dbReference>
<dbReference type="GO" id="GO:0035613">
    <property type="term" value="F:RNA stem-loop binding"/>
    <property type="evidence" value="ECO:0007669"/>
    <property type="project" value="Ensembl"/>
</dbReference>
<dbReference type="GO" id="GO:0035368">
    <property type="term" value="F:selenocysteine insertion sequence binding"/>
    <property type="evidence" value="ECO:0007669"/>
    <property type="project" value="Ensembl"/>
</dbReference>
<dbReference type="GO" id="GO:0008306">
    <property type="term" value="P:associative learning"/>
    <property type="evidence" value="ECO:0007669"/>
    <property type="project" value="Ensembl"/>
</dbReference>
<dbReference type="GO" id="GO:1990416">
    <property type="term" value="P:cellular response to brain-derived neurotrophic factor stimulus"/>
    <property type="evidence" value="ECO:0007669"/>
    <property type="project" value="Ensembl"/>
</dbReference>
<dbReference type="GO" id="GO:0072715">
    <property type="term" value="P:cellular response to selenite ion"/>
    <property type="evidence" value="ECO:0007669"/>
    <property type="project" value="Ensembl"/>
</dbReference>
<dbReference type="GO" id="GO:0048701">
    <property type="term" value="P:embryonic cranial skeleton morphogenesis"/>
    <property type="evidence" value="ECO:0000315"/>
    <property type="project" value="UniProtKB"/>
</dbReference>
<dbReference type="GO" id="GO:0035640">
    <property type="term" value="P:exploration behavior"/>
    <property type="evidence" value="ECO:0007669"/>
    <property type="project" value="Ensembl"/>
</dbReference>
<dbReference type="GO" id="GO:0006406">
    <property type="term" value="P:mRNA export from nucleus"/>
    <property type="evidence" value="ECO:0000303"/>
    <property type="project" value="ComplexPortal"/>
</dbReference>
<dbReference type="GO" id="GO:0000398">
    <property type="term" value="P:mRNA splicing, via spliceosome"/>
    <property type="evidence" value="ECO:0000314"/>
    <property type="project" value="UniProtKB"/>
</dbReference>
<dbReference type="GO" id="GO:0090394">
    <property type="term" value="P:negative regulation of excitatory postsynaptic potential"/>
    <property type="evidence" value="ECO:0007669"/>
    <property type="project" value="Ensembl"/>
</dbReference>
<dbReference type="GO" id="GO:1904570">
    <property type="term" value="P:negative regulation of selenocysteine incorporation"/>
    <property type="evidence" value="ECO:0007669"/>
    <property type="project" value="Ensembl"/>
</dbReference>
<dbReference type="GO" id="GO:0017148">
    <property type="term" value="P:negative regulation of translation"/>
    <property type="evidence" value="ECO:0000314"/>
    <property type="project" value="HGNC-UCL"/>
</dbReference>
<dbReference type="GO" id="GO:0000184">
    <property type="term" value="P:nuclear-transcribed mRNA catabolic process, nonsense-mediated decay"/>
    <property type="evidence" value="ECO:0000315"/>
    <property type="project" value="UniProtKB"/>
</dbReference>
<dbReference type="GO" id="GO:0045727">
    <property type="term" value="P:positive regulation of translation"/>
    <property type="evidence" value="ECO:0000315"/>
    <property type="project" value="UniProtKB"/>
</dbReference>
<dbReference type="GO" id="GO:2000622">
    <property type="term" value="P:regulation of nuclear-transcribed mRNA catabolic process, nonsense-mediated decay"/>
    <property type="evidence" value="ECO:0000314"/>
    <property type="project" value="ComplexPortal"/>
</dbReference>
<dbReference type="GO" id="GO:0099578">
    <property type="term" value="P:regulation of translation at postsynapse, modulating synaptic transmission"/>
    <property type="evidence" value="ECO:0007669"/>
    <property type="project" value="Ensembl"/>
</dbReference>
<dbReference type="GO" id="GO:0006364">
    <property type="term" value="P:rRNA processing"/>
    <property type="evidence" value="ECO:0007669"/>
    <property type="project" value="UniProtKB-KW"/>
</dbReference>
<dbReference type="CDD" id="cd18045">
    <property type="entry name" value="DEADc_EIF4AIII_DDX48"/>
    <property type="match status" value="1"/>
</dbReference>
<dbReference type="CDD" id="cd18787">
    <property type="entry name" value="SF2_C_DEAD"/>
    <property type="match status" value="1"/>
</dbReference>
<dbReference type="DisProt" id="DP02069"/>
<dbReference type="FunFam" id="3.40.50.300:FF:000031">
    <property type="entry name" value="Eukaryotic initiation factor 4A-III"/>
    <property type="match status" value="1"/>
</dbReference>
<dbReference type="FunFam" id="3.40.50.300:FF:000498">
    <property type="entry name" value="Eukaryotic initiation factor 4A-III"/>
    <property type="match status" value="1"/>
</dbReference>
<dbReference type="Gene3D" id="3.40.50.300">
    <property type="entry name" value="P-loop containing nucleotide triphosphate hydrolases"/>
    <property type="match status" value="2"/>
</dbReference>
<dbReference type="IDEAL" id="IID00370"/>
<dbReference type="InterPro" id="IPR011545">
    <property type="entry name" value="DEAD/DEAH_box_helicase_dom"/>
</dbReference>
<dbReference type="InterPro" id="IPR014001">
    <property type="entry name" value="Helicase_ATP-bd"/>
</dbReference>
<dbReference type="InterPro" id="IPR001650">
    <property type="entry name" value="Helicase_C-like"/>
</dbReference>
<dbReference type="InterPro" id="IPR027417">
    <property type="entry name" value="P-loop_NTPase"/>
</dbReference>
<dbReference type="InterPro" id="IPR000629">
    <property type="entry name" value="RNA-helicase_DEAD-box_CS"/>
</dbReference>
<dbReference type="InterPro" id="IPR014014">
    <property type="entry name" value="RNA_helicase_DEAD_Q_motif"/>
</dbReference>
<dbReference type="PANTHER" id="PTHR47958">
    <property type="entry name" value="ATP-DEPENDENT RNA HELICASE DBP3"/>
    <property type="match status" value="1"/>
</dbReference>
<dbReference type="Pfam" id="PF00270">
    <property type="entry name" value="DEAD"/>
    <property type="match status" value="1"/>
</dbReference>
<dbReference type="Pfam" id="PF00271">
    <property type="entry name" value="Helicase_C"/>
    <property type="match status" value="1"/>
</dbReference>
<dbReference type="SMART" id="SM00487">
    <property type="entry name" value="DEXDc"/>
    <property type="match status" value="1"/>
</dbReference>
<dbReference type="SMART" id="SM00490">
    <property type="entry name" value="HELICc"/>
    <property type="match status" value="1"/>
</dbReference>
<dbReference type="SUPFAM" id="SSF52540">
    <property type="entry name" value="P-loop containing nucleoside triphosphate hydrolases"/>
    <property type="match status" value="1"/>
</dbReference>
<dbReference type="PROSITE" id="PS00039">
    <property type="entry name" value="DEAD_ATP_HELICASE"/>
    <property type="match status" value="1"/>
</dbReference>
<dbReference type="PROSITE" id="PS51192">
    <property type="entry name" value="HELICASE_ATP_BIND_1"/>
    <property type="match status" value="1"/>
</dbReference>
<dbReference type="PROSITE" id="PS51194">
    <property type="entry name" value="HELICASE_CTER"/>
    <property type="match status" value="1"/>
</dbReference>
<dbReference type="PROSITE" id="PS51195">
    <property type="entry name" value="Q_MOTIF"/>
    <property type="match status" value="1"/>
</dbReference>